<gene>
    <name evidence="42" type="primary">PCM1</name>
</gene>
<dbReference type="EMBL" id="L27841">
    <property type="protein sequence ID" value="AAA60120.1"/>
    <property type="molecule type" value="mRNA"/>
</dbReference>
<dbReference type="EMBL" id="AC087273">
    <property type="status" value="NOT_ANNOTATED_CDS"/>
    <property type="molecule type" value="Genomic_DNA"/>
</dbReference>
<dbReference type="EMBL" id="AC087625">
    <property type="status" value="NOT_ANNOTATED_CDS"/>
    <property type="molecule type" value="Genomic_DNA"/>
</dbReference>
<dbReference type="EMBL" id="KF458696">
    <property type="status" value="NOT_ANNOTATED_CDS"/>
    <property type="molecule type" value="Genomic_DNA"/>
</dbReference>
<dbReference type="EMBL" id="BC000453">
    <property type="protein sequence ID" value="AAH00453.1"/>
    <property type="molecule type" value="mRNA"/>
</dbReference>
<dbReference type="EMBL" id="BC027477">
    <property type="protein sequence ID" value="AAH27477.1"/>
    <property type="status" value="ALT_SEQ"/>
    <property type="molecule type" value="mRNA"/>
</dbReference>
<dbReference type="EMBL" id="BC065022">
    <property type="protein sequence ID" value="AAH65022.1"/>
    <property type="status" value="ALT_SEQ"/>
    <property type="molecule type" value="mRNA"/>
</dbReference>
<dbReference type="EMBL" id="AK091406">
    <property type="protein sequence ID" value="BAC03656.1"/>
    <property type="status" value="ALT_INIT"/>
    <property type="molecule type" value="mRNA"/>
</dbReference>
<dbReference type="EMBL" id="AJ297349">
    <property type="protein sequence ID" value="CAC14882.1"/>
    <property type="status" value="ALT_SEQ"/>
    <property type="molecule type" value="mRNA"/>
</dbReference>
<dbReference type="CCDS" id="CCDS47812.1">
    <molecule id="Q15154-1"/>
</dbReference>
<dbReference type="CCDS" id="CCDS83255.1">
    <molecule id="Q15154-4"/>
</dbReference>
<dbReference type="CCDS" id="CCDS83256.1">
    <molecule id="Q15154-5"/>
</dbReference>
<dbReference type="CCDS" id="CCDS87582.1">
    <molecule id="Q15154-3"/>
</dbReference>
<dbReference type="PIR" id="A54103">
    <property type="entry name" value="A54103"/>
</dbReference>
<dbReference type="RefSeq" id="NP_001302436.2">
    <molecule id="Q15154-5"/>
    <property type="nucleotide sequence ID" value="NM_001315507.2"/>
</dbReference>
<dbReference type="RefSeq" id="NP_001302437.2">
    <molecule id="Q15154-4"/>
    <property type="nucleotide sequence ID" value="NM_001315508.2"/>
</dbReference>
<dbReference type="RefSeq" id="NP_001339573.2">
    <molecule id="Q15154-2"/>
    <property type="nucleotide sequence ID" value="NM_001352644.2"/>
</dbReference>
<dbReference type="RefSeq" id="NP_001339574.2">
    <molecule id="Q15154-2"/>
    <property type="nucleotide sequence ID" value="NM_001352645.2"/>
</dbReference>
<dbReference type="RefSeq" id="NP_001339581.2">
    <molecule id="Q15154-1"/>
    <property type="nucleotide sequence ID" value="NM_001352652.2"/>
</dbReference>
<dbReference type="RefSeq" id="NP_001339582.2">
    <molecule id="Q15154-1"/>
    <property type="nucleotide sequence ID" value="NM_001352653.2"/>
</dbReference>
<dbReference type="RefSeq" id="NP_001339588.2">
    <molecule id="Q15154-3"/>
    <property type="nucleotide sequence ID" value="NM_001352659.2"/>
</dbReference>
<dbReference type="RefSeq" id="NP_001339589.2">
    <molecule id="Q15154-3"/>
    <property type="nucleotide sequence ID" value="NM_001352660.2"/>
</dbReference>
<dbReference type="RefSeq" id="NP_006188.3">
    <molecule id="Q15154-1"/>
    <property type="nucleotide sequence ID" value="NM_006197.3"/>
</dbReference>
<dbReference type="RefSeq" id="XP_016868972.1">
    <property type="nucleotide sequence ID" value="XM_017013483.1"/>
</dbReference>
<dbReference type="RefSeq" id="XP_016868973.1">
    <property type="nucleotide sequence ID" value="XM_017013484.1"/>
</dbReference>
<dbReference type="RefSeq" id="XP_016868983.1">
    <property type="nucleotide sequence ID" value="XM_017013494.1"/>
</dbReference>
<dbReference type="RefSeq" id="XP_016868984.1">
    <property type="nucleotide sequence ID" value="XM_017013495.1"/>
</dbReference>
<dbReference type="RefSeq" id="XP_016868985.1">
    <property type="nucleotide sequence ID" value="XM_017013496.1"/>
</dbReference>
<dbReference type="PDB" id="6HYL">
    <property type="method" value="X-ray"/>
    <property type="resolution" value="1.56 A"/>
    <property type="chains" value="A/B=1959-1972"/>
</dbReference>
<dbReference type="PDB" id="6HYM">
    <property type="method" value="X-ray"/>
    <property type="resolution" value="1.86 A"/>
    <property type="chains" value="A/B=1959-1972"/>
</dbReference>
<dbReference type="PDB" id="7Q46">
    <property type="method" value="X-ray"/>
    <property type="resolution" value="2.46 A"/>
    <property type="chains" value="B/D/F=1737-1751"/>
</dbReference>
<dbReference type="PDBsum" id="6HYL"/>
<dbReference type="PDBsum" id="6HYM"/>
<dbReference type="PDBsum" id="7Q46"/>
<dbReference type="SMR" id="Q15154"/>
<dbReference type="BioGRID" id="111139">
    <property type="interactions" value="490"/>
</dbReference>
<dbReference type="CORUM" id="Q15154"/>
<dbReference type="DIP" id="DIP-42189N"/>
<dbReference type="FunCoup" id="Q15154">
    <property type="interactions" value="3859"/>
</dbReference>
<dbReference type="IntAct" id="Q15154">
    <property type="interactions" value="376"/>
</dbReference>
<dbReference type="MINT" id="Q15154"/>
<dbReference type="STRING" id="9606.ENSP00000327077"/>
<dbReference type="MoonDB" id="Q15154">
    <property type="type" value="Predicted"/>
</dbReference>
<dbReference type="TCDB" id="3.A.33.1.1">
    <property type="family name" value="the bbsome complex (bbsome) family"/>
</dbReference>
<dbReference type="CarbonylDB" id="Q15154"/>
<dbReference type="GlyGen" id="Q15154">
    <property type="glycosylation" value="6 sites, 4 N-linked glycans (3 sites), 1 O-linked glycan (2 sites)"/>
</dbReference>
<dbReference type="iPTMnet" id="Q15154"/>
<dbReference type="MetOSite" id="Q15154"/>
<dbReference type="PhosphoSitePlus" id="Q15154"/>
<dbReference type="BioMuta" id="PCM1"/>
<dbReference type="DMDM" id="296439495"/>
<dbReference type="jPOST" id="Q15154"/>
<dbReference type="MassIVE" id="Q15154"/>
<dbReference type="PaxDb" id="9606-ENSP00000327077"/>
<dbReference type="PeptideAtlas" id="Q15154"/>
<dbReference type="ProteomicsDB" id="1623"/>
<dbReference type="ProteomicsDB" id="18163"/>
<dbReference type="ProteomicsDB" id="18571"/>
<dbReference type="ProteomicsDB" id="60471">
    <molecule id="Q15154-1"/>
</dbReference>
<dbReference type="ProteomicsDB" id="60472">
    <molecule id="Q15154-2"/>
</dbReference>
<dbReference type="ProteomicsDB" id="60473">
    <molecule id="Q15154-3"/>
</dbReference>
<dbReference type="Pumba" id="Q15154"/>
<dbReference type="Antibodypedia" id="5155">
    <property type="antibodies" value="221 antibodies from 32 providers"/>
</dbReference>
<dbReference type="DNASU" id="5108"/>
<dbReference type="Ensembl" id="ENST00000325083.13">
    <molecule id="Q15154-1"/>
    <property type="protein sequence ID" value="ENSP00000327077.8"/>
    <property type="gene ID" value="ENSG00000078674.20"/>
</dbReference>
<dbReference type="Ensembl" id="ENST00000518537.5">
    <molecule id="Q15154-3"/>
    <property type="protein sequence ID" value="ENSP00000428123.1"/>
    <property type="gene ID" value="ENSG00000078674.20"/>
</dbReference>
<dbReference type="Ensembl" id="ENST00000519253.5">
    <molecule id="Q15154-5"/>
    <property type="protein sequence ID" value="ENSP00000431099.1"/>
    <property type="gene ID" value="ENSG00000078674.20"/>
</dbReference>
<dbReference type="Ensembl" id="ENST00000524226.5">
    <molecule id="Q15154-4"/>
    <property type="protein sequence ID" value="ENSP00000430521.1"/>
    <property type="gene ID" value="ENSG00000078674.20"/>
</dbReference>
<dbReference type="GeneID" id="5108"/>
<dbReference type="KEGG" id="hsa:5108"/>
<dbReference type="MANE-Select" id="ENST00000325083.13">
    <property type="protein sequence ID" value="ENSP00000327077.8"/>
    <property type="RefSeq nucleotide sequence ID" value="NM_006197.4"/>
    <property type="RefSeq protein sequence ID" value="NP_006188.4"/>
</dbReference>
<dbReference type="UCSC" id="uc003wyi.5">
    <molecule id="Q15154-1"/>
    <property type="organism name" value="human"/>
</dbReference>
<dbReference type="UCSC" id="uc003wyj.5">
    <property type="organism name" value="human"/>
</dbReference>
<dbReference type="UCSC" id="uc011kyh.3">
    <property type="organism name" value="human"/>
</dbReference>
<dbReference type="AGR" id="HGNC:8727"/>
<dbReference type="CTD" id="5108"/>
<dbReference type="DisGeNET" id="5108"/>
<dbReference type="GeneCards" id="PCM1"/>
<dbReference type="HGNC" id="HGNC:8727">
    <property type="gene designation" value="PCM1"/>
</dbReference>
<dbReference type="HPA" id="ENSG00000078674">
    <property type="expression patterns" value="Low tissue specificity"/>
</dbReference>
<dbReference type="MalaCards" id="PCM1"/>
<dbReference type="MIM" id="600299">
    <property type="type" value="gene"/>
</dbReference>
<dbReference type="neXtProt" id="NX_Q15154"/>
<dbReference type="OpenTargets" id="ENSG00000078674"/>
<dbReference type="Orphanet" id="146">
    <property type="disease" value="Differentiated thyroid carcinoma"/>
</dbReference>
<dbReference type="PharmGKB" id="PA33073"/>
<dbReference type="VEuPathDB" id="HostDB:ENSG00000078674"/>
<dbReference type="eggNOG" id="ENOG502QRMF">
    <property type="taxonomic scope" value="Eukaryota"/>
</dbReference>
<dbReference type="GeneTree" id="ENSGT00390000006641"/>
<dbReference type="InParanoid" id="Q15154"/>
<dbReference type="OMA" id="DDXNTVI"/>
<dbReference type="OrthoDB" id="2125770at2759"/>
<dbReference type="PAN-GO" id="Q15154">
    <property type="GO annotations" value="7 GO annotations based on evolutionary models"/>
</dbReference>
<dbReference type="PhylomeDB" id="Q15154"/>
<dbReference type="TreeFam" id="TF328740"/>
<dbReference type="PathwayCommons" id="Q15154"/>
<dbReference type="Reactome" id="R-HSA-2565942">
    <property type="pathway name" value="Regulation of PLK1 Activity at G2/M Transition"/>
</dbReference>
<dbReference type="Reactome" id="R-HSA-380259">
    <property type="pathway name" value="Loss of Nlp from mitotic centrosomes"/>
</dbReference>
<dbReference type="Reactome" id="R-HSA-380270">
    <property type="pathway name" value="Recruitment of mitotic centrosome proteins and complexes"/>
</dbReference>
<dbReference type="Reactome" id="R-HSA-380284">
    <property type="pathway name" value="Loss of proteins required for interphase microtubule organization from the centrosome"/>
</dbReference>
<dbReference type="Reactome" id="R-HSA-380320">
    <property type="pathway name" value="Recruitment of NuMA to mitotic centrosomes"/>
</dbReference>
<dbReference type="Reactome" id="R-HSA-5620912">
    <property type="pathway name" value="Anchoring of the basal body to the plasma membrane"/>
</dbReference>
<dbReference type="Reactome" id="R-HSA-8854518">
    <property type="pathway name" value="AURKA Activation by TPX2"/>
</dbReference>
<dbReference type="SignaLink" id="Q15154"/>
<dbReference type="SIGNOR" id="Q15154"/>
<dbReference type="BioGRID-ORCS" id="5108">
    <property type="hits" value="123 hits in 1163 CRISPR screens"/>
</dbReference>
<dbReference type="CD-CODE" id="1DAEF59B">
    <property type="entry name" value="Pericentriolar matrix"/>
</dbReference>
<dbReference type="CD-CODE" id="232F8A39">
    <property type="entry name" value="P-body"/>
</dbReference>
<dbReference type="CD-CODE" id="8C2F96ED">
    <property type="entry name" value="Centrosome"/>
</dbReference>
<dbReference type="ChiTaRS" id="PCM1">
    <property type="organism name" value="human"/>
</dbReference>
<dbReference type="GeneWiki" id="PCM1"/>
<dbReference type="GenomeRNAi" id="5108"/>
<dbReference type="Pharos" id="Q15154">
    <property type="development level" value="Tbio"/>
</dbReference>
<dbReference type="PRO" id="PR:Q15154"/>
<dbReference type="Proteomes" id="UP000005640">
    <property type="component" value="Chromosome 8"/>
</dbReference>
<dbReference type="RNAct" id="Q15154">
    <property type="molecule type" value="protein"/>
</dbReference>
<dbReference type="Bgee" id="ENSG00000078674">
    <property type="expression patterns" value="Expressed in calcaneal tendon and 205 other cell types or tissues"/>
</dbReference>
<dbReference type="ExpressionAtlas" id="Q15154">
    <property type="expression patterns" value="baseline and differential"/>
</dbReference>
<dbReference type="GO" id="GO:0045177">
    <property type="term" value="C:apical part of cell"/>
    <property type="evidence" value="ECO:0007669"/>
    <property type="project" value="Ensembl"/>
</dbReference>
<dbReference type="GO" id="GO:0034451">
    <property type="term" value="C:centriolar satellite"/>
    <property type="evidence" value="ECO:0000314"/>
    <property type="project" value="UniProtKB"/>
</dbReference>
<dbReference type="GO" id="GO:0005814">
    <property type="term" value="C:centriole"/>
    <property type="evidence" value="ECO:0007669"/>
    <property type="project" value="Ensembl"/>
</dbReference>
<dbReference type="GO" id="GO:0005813">
    <property type="term" value="C:centrosome"/>
    <property type="evidence" value="ECO:0000314"/>
    <property type="project" value="UniProtKB"/>
</dbReference>
<dbReference type="GO" id="GO:0036064">
    <property type="term" value="C:ciliary basal body"/>
    <property type="evidence" value="ECO:0000314"/>
    <property type="project" value="HPA"/>
</dbReference>
<dbReference type="GO" id="GO:0035869">
    <property type="term" value="C:ciliary transition zone"/>
    <property type="evidence" value="ECO:0000314"/>
    <property type="project" value="GO_Central"/>
</dbReference>
<dbReference type="GO" id="GO:0005929">
    <property type="term" value="C:cilium"/>
    <property type="evidence" value="ECO:0000314"/>
    <property type="project" value="HPA"/>
</dbReference>
<dbReference type="GO" id="GO:0005737">
    <property type="term" value="C:cytoplasm"/>
    <property type="evidence" value="ECO:0000250"/>
    <property type="project" value="BHF-UCL"/>
</dbReference>
<dbReference type="GO" id="GO:0005829">
    <property type="term" value="C:cytosol"/>
    <property type="evidence" value="ECO:0000314"/>
    <property type="project" value="HPA"/>
</dbReference>
<dbReference type="GO" id="GO:0016020">
    <property type="term" value="C:membrane"/>
    <property type="evidence" value="ECO:0007005"/>
    <property type="project" value="UniProtKB"/>
</dbReference>
<dbReference type="GO" id="GO:0015630">
    <property type="term" value="C:microtubule cytoskeleton"/>
    <property type="evidence" value="ECO:0000314"/>
    <property type="project" value="HPA"/>
</dbReference>
<dbReference type="GO" id="GO:0031965">
    <property type="term" value="C:nuclear membrane"/>
    <property type="evidence" value="ECO:0000314"/>
    <property type="project" value="HPA"/>
</dbReference>
<dbReference type="GO" id="GO:0005654">
    <property type="term" value="C:nucleoplasm"/>
    <property type="evidence" value="ECO:0000314"/>
    <property type="project" value="HPA"/>
</dbReference>
<dbReference type="GO" id="GO:0000242">
    <property type="term" value="C:pericentriolar material"/>
    <property type="evidence" value="ECO:0000250"/>
    <property type="project" value="BHF-UCL"/>
</dbReference>
<dbReference type="GO" id="GO:0032991">
    <property type="term" value="C:protein-containing complex"/>
    <property type="evidence" value="ECO:0000314"/>
    <property type="project" value="MGI"/>
</dbReference>
<dbReference type="GO" id="GO:0042802">
    <property type="term" value="F:identical protein binding"/>
    <property type="evidence" value="ECO:0000250"/>
    <property type="project" value="BHF-UCL"/>
</dbReference>
<dbReference type="GO" id="GO:0060090">
    <property type="term" value="F:molecular adaptor activity"/>
    <property type="evidence" value="ECO:0000314"/>
    <property type="project" value="UniProt"/>
</dbReference>
<dbReference type="GO" id="GO:0007098">
    <property type="term" value="P:centrosome cycle"/>
    <property type="evidence" value="ECO:0000315"/>
    <property type="project" value="BHF-UCL"/>
</dbReference>
<dbReference type="GO" id="GO:0060271">
    <property type="term" value="P:cilium assembly"/>
    <property type="evidence" value="ECO:0000315"/>
    <property type="project" value="UniProtKB"/>
</dbReference>
<dbReference type="GO" id="GO:0031122">
    <property type="term" value="P:cytoplasmic microtubule organization"/>
    <property type="evidence" value="ECO:0000315"/>
    <property type="project" value="UniProtKB"/>
</dbReference>
<dbReference type="GO" id="GO:0022027">
    <property type="term" value="P:interkinetic nuclear migration"/>
    <property type="evidence" value="ECO:0000250"/>
    <property type="project" value="BHF-UCL"/>
</dbReference>
<dbReference type="GO" id="GO:0035735">
    <property type="term" value="P:intraciliary transport involved in cilium assembly"/>
    <property type="evidence" value="ECO:0000315"/>
    <property type="project" value="UniProtKB"/>
</dbReference>
<dbReference type="GO" id="GO:0034453">
    <property type="term" value="P:microtubule anchoring"/>
    <property type="evidence" value="ECO:0000250"/>
    <property type="project" value="BHF-UCL"/>
</dbReference>
<dbReference type="GO" id="GO:0034454">
    <property type="term" value="P:microtubule anchoring at centrosome"/>
    <property type="evidence" value="ECO:0000318"/>
    <property type="project" value="GO_Central"/>
</dbReference>
<dbReference type="GO" id="GO:0050768">
    <property type="term" value="P:negative regulation of neurogenesis"/>
    <property type="evidence" value="ECO:0000250"/>
    <property type="project" value="BHF-UCL"/>
</dbReference>
<dbReference type="GO" id="GO:0001764">
    <property type="term" value="P:neuron migration"/>
    <property type="evidence" value="ECO:0007669"/>
    <property type="project" value="Ensembl"/>
</dbReference>
<dbReference type="GO" id="GO:0097150">
    <property type="term" value="P:neuronal stem cell population maintenance"/>
    <property type="evidence" value="ECO:0007669"/>
    <property type="project" value="Ensembl"/>
</dbReference>
<dbReference type="GO" id="GO:1905515">
    <property type="term" value="P:non-motile cilium assembly"/>
    <property type="evidence" value="ECO:0000315"/>
    <property type="project" value="GO_Central"/>
</dbReference>
<dbReference type="GO" id="GO:0090316">
    <property type="term" value="P:positive regulation of intracellular protein transport"/>
    <property type="evidence" value="ECO:0000315"/>
    <property type="project" value="UniProtKB"/>
</dbReference>
<dbReference type="GO" id="GO:0071539">
    <property type="term" value="P:protein localization to centrosome"/>
    <property type="evidence" value="ECO:0000315"/>
    <property type="project" value="SYSCILIA_CCNET"/>
</dbReference>
<dbReference type="GO" id="GO:0140706">
    <property type="term" value="P:protein-containing complex localization to centriolar satellite"/>
    <property type="evidence" value="ECO:0000314"/>
    <property type="project" value="UniProt"/>
</dbReference>
<dbReference type="GO" id="GO:0061635">
    <property type="term" value="P:regulation of protein complex stability"/>
    <property type="evidence" value="ECO:0000314"/>
    <property type="project" value="UniProt"/>
</dbReference>
<dbReference type="GO" id="GO:0035176">
    <property type="term" value="P:social behavior"/>
    <property type="evidence" value="ECO:0007669"/>
    <property type="project" value="Ensembl"/>
</dbReference>
<dbReference type="InterPro" id="IPR031446">
    <property type="entry name" value="PCM1_C"/>
</dbReference>
<dbReference type="InterPro" id="IPR024138">
    <property type="entry name" value="Pericentriolar_Pcm1"/>
</dbReference>
<dbReference type="PANTHER" id="PTHR14164:SF12">
    <property type="entry name" value="PERICENTRIOLAR MATERIAL 1 PROTEIN"/>
    <property type="match status" value="1"/>
</dbReference>
<dbReference type="PANTHER" id="PTHR14164">
    <property type="entry name" value="PERICENTRIOLAR MATERIAL 1-RELATED"/>
    <property type="match status" value="1"/>
</dbReference>
<dbReference type="Pfam" id="PF15717">
    <property type="entry name" value="PCM1_C"/>
    <property type="match status" value="1"/>
</dbReference>
<feature type="initiator methionine" description="Removed" evidence="51">
    <location>
        <position position="1"/>
    </location>
</feature>
<feature type="chain" id="PRO_0000274037" description="Pericentriolar material 1 protein">
    <location>
        <begin position="2"/>
        <end position="2024"/>
    </location>
</feature>
<feature type="region of interest" description="Disordered" evidence="4">
    <location>
        <begin position="1"/>
        <end position="92"/>
    </location>
</feature>
<feature type="region of interest" description="Mediates interaction with DZIP1" evidence="29">
    <location>
        <begin position="2"/>
        <end position="1460"/>
    </location>
</feature>
<feature type="region of interest" description="Disordered" evidence="4">
    <location>
        <begin position="111"/>
        <end position="163"/>
    </location>
</feature>
<feature type="region of interest" description="Disordered" evidence="4">
    <location>
        <begin position="354"/>
        <end position="392"/>
    </location>
</feature>
<feature type="region of interest" description="Disordered" evidence="4">
    <location>
        <begin position="421"/>
        <end position="492"/>
    </location>
</feature>
<feature type="region of interest" description="Disordered" evidence="4">
    <location>
        <begin position="523"/>
        <end position="548"/>
    </location>
</feature>
<feature type="region of interest" description="Disordered" evidence="4">
    <location>
        <begin position="614"/>
        <end position="652"/>
    </location>
</feature>
<feature type="region of interest" description="Disordered" evidence="4">
    <location>
        <begin position="699"/>
        <end position="726"/>
    </location>
</feature>
<feature type="region of interest" description="Disordered" evidence="4">
    <location>
        <begin position="915"/>
        <end position="947"/>
    </location>
</feature>
<feature type="region of interest" description="Disordered" evidence="4">
    <location>
        <begin position="1085"/>
        <end position="1109"/>
    </location>
</feature>
<feature type="region of interest" description="Disordered" evidence="4">
    <location>
        <begin position="1152"/>
        <end position="1211"/>
    </location>
</feature>
<feature type="region of interest" description="Disordered" evidence="4">
    <location>
        <begin position="1232"/>
        <end position="1342"/>
    </location>
</feature>
<feature type="region of interest" description="Interaction with HAP1" evidence="38">
    <location>
        <begin position="1279"/>
        <end position="1799"/>
    </location>
</feature>
<feature type="region of interest" description="Disordered" evidence="4">
    <location>
        <begin position="1725"/>
        <end position="1868"/>
    </location>
</feature>
<feature type="region of interest" description="Disordered" evidence="4">
    <location>
        <begin position="1880"/>
        <end position="1944"/>
    </location>
</feature>
<feature type="region of interest" description="Interaction with BBS4" evidence="9">
    <location>
        <begin position="1913"/>
        <end position="2024"/>
    </location>
</feature>
<feature type="region of interest" description="Disordered" evidence="4">
    <location>
        <begin position="2005"/>
        <end position="2024"/>
    </location>
</feature>
<feature type="coiled-coil region" evidence="3">
    <location>
        <begin position="218"/>
        <end position="301"/>
    </location>
</feature>
<feature type="coiled-coil region" evidence="3">
    <location>
        <begin position="400"/>
        <end position="424"/>
    </location>
</feature>
<feature type="coiled-coil region" evidence="3">
    <location>
        <begin position="487"/>
        <end position="543"/>
    </location>
</feature>
<feature type="coiled-coil region" evidence="3">
    <location>
        <begin position="651"/>
        <end position="682"/>
    </location>
</feature>
<feature type="coiled-coil region" evidence="3">
    <location>
        <begin position="726"/>
        <end position="769"/>
    </location>
</feature>
<feature type="coiled-coil region" evidence="3">
    <location>
        <begin position="824"/>
        <end position="858"/>
    </location>
</feature>
<feature type="coiled-coil region" evidence="3">
    <location>
        <begin position="1063"/>
        <end position="1089"/>
    </location>
</feature>
<feature type="coiled-coil region" evidence="3">
    <location>
        <begin position="1515"/>
        <end position="1539"/>
    </location>
</feature>
<feature type="compositionally biased region" description="Basic and acidic residues" evidence="4">
    <location>
        <begin position="43"/>
        <end position="61"/>
    </location>
</feature>
<feature type="compositionally biased region" description="Polar residues" evidence="4">
    <location>
        <begin position="116"/>
        <end position="132"/>
    </location>
</feature>
<feature type="compositionally biased region" description="Polar residues" evidence="4">
    <location>
        <begin position="147"/>
        <end position="163"/>
    </location>
</feature>
<feature type="compositionally biased region" description="Polar residues" evidence="4">
    <location>
        <begin position="369"/>
        <end position="383"/>
    </location>
</feature>
<feature type="compositionally biased region" description="Polar residues" evidence="4">
    <location>
        <begin position="425"/>
        <end position="445"/>
    </location>
</feature>
<feature type="compositionally biased region" description="Polar residues" evidence="4">
    <location>
        <begin position="456"/>
        <end position="477"/>
    </location>
</feature>
<feature type="compositionally biased region" description="Acidic residues" evidence="4">
    <location>
        <begin position="618"/>
        <end position="632"/>
    </location>
</feature>
<feature type="compositionally biased region" description="Low complexity" evidence="4">
    <location>
        <begin position="634"/>
        <end position="643"/>
    </location>
</feature>
<feature type="compositionally biased region" description="Polar residues" evidence="4">
    <location>
        <begin position="708"/>
        <end position="719"/>
    </location>
</feature>
<feature type="compositionally biased region" description="Polar residues" evidence="4">
    <location>
        <begin position="925"/>
        <end position="946"/>
    </location>
</feature>
<feature type="compositionally biased region" description="Basic and acidic residues" evidence="4">
    <location>
        <begin position="1089"/>
        <end position="1099"/>
    </location>
</feature>
<feature type="compositionally biased region" description="Polar residues" evidence="4">
    <location>
        <begin position="1152"/>
        <end position="1173"/>
    </location>
</feature>
<feature type="compositionally biased region" description="Basic and acidic residues" evidence="4">
    <location>
        <begin position="1192"/>
        <end position="1201"/>
    </location>
</feature>
<feature type="compositionally biased region" description="Polar residues" evidence="4">
    <location>
        <begin position="1232"/>
        <end position="1246"/>
    </location>
</feature>
<feature type="compositionally biased region" description="Basic residues" evidence="4">
    <location>
        <begin position="1296"/>
        <end position="1313"/>
    </location>
</feature>
<feature type="compositionally biased region" description="Acidic residues" evidence="4">
    <location>
        <begin position="1768"/>
        <end position="1777"/>
    </location>
</feature>
<feature type="compositionally biased region" description="Polar residues" evidence="4">
    <location>
        <begin position="1783"/>
        <end position="1797"/>
    </location>
</feature>
<feature type="compositionally biased region" description="Acidic residues" evidence="4">
    <location>
        <begin position="1799"/>
        <end position="1815"/>
    </location>
</feature>
<feature type="compositionally biased region" description="Polar residues" evidence="4">
    <location>
        <begin position="1818"/>
        <end position="1827"/>
    </location>
</feature>
<feature type="compositionally biased region" description="Basic and acidic residues" evidence="4">
    <location>
        <begin position="1835"/>
        <end position="1860"/>
    </location>
</feature>
<feature type="compositionally biased region" description="Low complexity" evidence="4">
    <location>
        <begin position="1905"/>
        <end position="1916"/>
    </location>
</feature>
<feature type="compositionally biased region" description="Polar residues" evidence="4">
    <location>
        <begin position="1924"/>
        <end position="1933"/>
    </location>
</feature>
<feature type="site" description="Breakpoint for translocation to form PCM1-JAK2 fusion protein">
    <location>
        <begin position="1314"/>
        <end position="1315"/>
    </location>
</feature>
<feature type="site" description="Breakpoint for translocation to form PCM1-JAK2 fusion protein">
    <location>
        <begin position="1369"/>
        <end position="1370"/>
    </location>
</feature>
<feature type="site" description="Breakpoint for translocation to form PCM1-JAK2 fusion protein">
    <location>
        <begin position="1470"/>
        <end position="1471"/>
    </location>
</feature>
<feature type="site" description="Breakpoint for translocation to form PCM1-RET fusion protein">
    <location>
        <begin position="1609"/>
        <end position="1610"/>
    </location>
</feature>
<feature type="site" description="Breakpoint for translocation to form PCM1-JAK2 fusion protein">
    <location>
        <begin position="1947"/>
        <end position="1948"/>
    </location>
</feature>
<feature type="modified residue" description="N-acetylalanine" evidence="51">
    <location>
        <position position="2"/>
    </location>
</feature>
<feature type="modified residue" description="Phosphoserine" evidence="43 44 45 46 48 49 50 52">
    <location>
        <position position="65"/>
    </location>
</feature>
<feature type="modified residue" description="Phosphoserine" evidence="44 46 48 49 50 52">
    <location>
        <position position="68"/>
    </location>
</feature>
<feature type="modified residue" description="Phosphoserine" evidence="44 46 48 49 52">
    <location>
        <position position="69"/>
    </location>
</feature>
<feature type="modified residue" description="Phosphoserine" evidence="46 48 49 52">
    <location>
        <position position="93"/>
    </location>
</feature>
<feature type="modified residue" description="Phosphoserine" evidence="45 52">
    <location>
        <position position="110"/>
    </location>
</feature>
<feature type="modified residue" description="Phosphoserine" evidence="52">
    <location>
        <position position="116"/>
    </location>
</feature>
<feature type="modified residue" description="Phosphoserine" evidence="52">
    <location>
        <position position="119"/>
    </location>
</feature>
<feature type="modified residue" description="Phosphoserine; in variant Ser-159" evidence="52">
    <location>
        <position position="159"/>
    </location>
</feature>
<feature type="modified residue" description="Phosphoserine" evidence="52">
    <location>
        <position position="370"/>
    </location>
</feature>
<feature type="modified residue" description="Phosphoserine; by PLK4" evidence="32 52">
    <location>
        <position position="372"/>
    </location>
</feature>
<feature type="modified residue" description="Phosphoserine" evidence="52">
    <location>
        <position position="384"/>
    </location>
</feature>
<feature type="modified residue" description="N6-acetyllysine" evidence="47">
    <location>
        <position position="399"/>
    </location>
</feature>
<feature type="modified residue" description="Phosphoserine" evidence="52">
    <location>
        <position position="588"/>
    </location>
</feature>
<feature type="modified residue" description="Phosphoserine" evidence="2">
    <location>
        <position position="643"/>
    </location>
</feature>
<feature type="modified residue" description="Phosphothreonine" evidence="52">
    <location>
        <position position="859"/>
    </location>
</feature>
<feature type="modified residue" description="Phosphoserine" evidence="49 52">
    <location>
        <position position="861"/>
    </location>
</feature>
<feature type="modified residue" description="Phosphoserine" evidence="2">
    <location>
        <position position="866"/>
    </location>
</feature>
<feature type="modified residue" description="Phosphoserine" evidence="2">
    <location>
        <position position="869"/>
    </location>
</feature>
<feature type="modified residue" description="Phosphoserine" evidence="2">
    <location>
        <position position="872"/>
    </location>
</feature>
<feature type="modified residue" description="Phosphothreonine" evidence="2">
    <location>
        <position position="877"/>
    </location>
</feature>
<feature type="modified residue" description="Phosphoserine" evidence="46 49 52">
    <location>
        <position position="960"/>
    </location>
</feature>
<feature type="modified residue" description="Phosphoserine" evidence="52">
    <location>
        <position position="977"/>
    </location>
</feature>
<feature type="modified residue" description="Phosphoserine" evidence="52">
    <location>
        <position position="988"/>
    </location>
</feature>
<feature type="modified residue" description="Phosphoserine" evidence="52">
    <location>
        <position position="991"/>
    </location>
</feature>
<feature type="modified residue" description="Phosphoserine" evidence="48">
    <location>
        <position position="1185"/>
    </location>
</feature>
<feature type="modified residue" description="Phosphoserine" evidence="2">
    <location>
        <position position="1188"/>
    </location>
</feature>
<feature type="modified residue" description="Phosphoserine" evidence="52">
    <location>
        <position position="1229"/>
    </location>
</feature>
<feature type="modified residue" description="Phosphoserine" evidence="46 52">
    <location>
        <position position="1231"/>
    </location>
</feature>
<feature type="modified residue" description="Phosphoserine" evidence="46 52">
    <location>
        <position position="1257"/>
    </location>
</feature>
<feature type="modified residue" description="Phosphoserine" evidence="46">
    <location>
        <position position="1260"/>
    </location>
</feature>
<feature type="modified residue" description="Phosphoserine" evidence="2">
    <location>
        <position position="1262"/>
    </location>
</feature>
<feature type="modified residue" description="Phosphoserine" evidence="46">
    <location>
        <position position="1263"/>
    </location>
</feature>
<feature type="modified residue" description="Phosphoserine" evidence="2">
    <location>
        <position position="1318"/>
    </location>
</feature>
<feature type="modified residue" description="Phosphoserine" evidence="2">
    <location>
        <position position="1320"/>
    </location>
</feature>
<feature type="modified residue" description="Phosphothreonine" evidence="53">
    <location>
        <position position="1468"/>
    </location>
</feature>
<feature type="modified residue" description="Phosphoserine" evidence="2">
    <location>
        <position position="1573"/>
    </location>
</feature>
<feature type="modified residue" description="Phosphoserine" evidence="48 52">
    <location>
        <position position="1697"/>
    </location>
</feature>
<feature type="modified residue" description="Phosphoserine" evidence="45 46 49 50 52">
    <location>
        <position position="1730"/>
    </location>
</feature>
<feature type="modified residue" description="Phosphoserine" evidence="46 48 50">
    <location>
        <position position="1765"/>
    </location>
</feature>
<feature type="modified residue" description="Phosphoserine" evidence="46 48 50">
    <location>
        <position position="1768"/>
    </location>
</feature>
<feature type="modified residue" description="Phosphoserine" evidence="46 48">
    <location>
        <position position="1776"/>
    </location>
</feature>
<feature type="modified residue" description="Phosphoserine" evidence="2">
    <location>
        <position position="1782"/>
    </location>
</feature>
<feature type="modified residue" description="Phosphoserine" evidence="50">
    <location>
        <position position="1958"/>
    </location>
</feature>
<feature type="modified residue" description="Phosphoserine" evidence="48 52">
    <location>
        <position position="1977"/>
    </location>
</feature>
<feature type="splice variant" id="VSP_022609" description="In isoform 3." evidence="40">
    <original>R</original>
    <variation>RENEEEDVRTIDSAVGSGSVAESTSLNIDVQSEASDTTAR</variation>
    <location>
        <position position="263"/>
    </location>
</feature>
<feature type="splice variant" id="VSP_022610" description="In isoform 3." evidence="40">
    <location>
        <begin position="492"/>
        <end position="2024"/>
    </location>
</feature>
<feature type="splice variant" id="VSP_059399" description="In isoform 4." evidence="41">
    <original>L</original>
    <variation>LA</variation>
    <location>
        <position position="601"/>
    </location>
</feature>
<feature type="splice variant" id="VSP_022611" description="In isoform 2 and isoform 4." evidence="39">
    <original>RYESASMSSTCEPCKSRNRHSAQTEEPVQAKVFSRKNHEQLEKIIKCNRSTEISSE</original>
    <variation>K</variation>
    <location>
        <begin position="1315"/>
        <end position="1370"/>
    </location>
</feature>
<feature type="splice variant" id="VSP_059400" description="In isoform 5." evidence="41">
    <location>
        <begin position="1556"/>
        <end position="1563"/>
    </location>
</feature>
<feature type="splice variant" id="VSP_059401" description="In isoform 4." evidence="41">
    <location>
        <begin position="1838"/>
        <end position="1947"/>
    </location>
</feature>
<feature type="sequence variant" id="VAR_030164" description="Phosphorylated; dbSNP:rs412750." evidence="11 37 52">
    <original>N</original>
    <variation>S</variation>
    <location>
        <position position="159"/>
    </location>
</feature>
<feature type="sequence variant" id="VAR_030165" description="In dbSNP:rs2285302.">
    <original>A</original>
    <variation>D</variation>
    <location>
        <position position="176"/>
    </location>
</feature>
<feature type="sequence variant" id="VAR_030166" description="In dbSNP:rs208753." evidence="37">
    <original>M</original>
    <variation>V</variation>
    <location>
        <position position="597"/>
    </location>
</feature>
<feature type="sequence variant" id="VAR_047381" description="In dbSNP:rs34325017.">
    <original>S</original>
    <variation>P</variation>
    <location>
        <position position="600"/>
    </location>
</feature>
<feature type="sequence variant" id="VAR_030167" description="In dbSNP:rs17635381.">
    <original>A</original>
    <variation>S</variation>
    <location>
        <position position="691"/>
    </location>
</feature>
<feature type="sequence variant" id="VAR_030168" description="In dbSNP:rs7009117.">
    <original>G</original>
    <variation>V</variation>
    <location>
        <position position="871"/>
    </location>
</feature>
<feature type="sequence variant" id="VAR_030169" description="In dbSNP:rs17514547.">
    <original>R</original>
    <variation>H</variation>
    <location>
        <position position="1251"/>
    </location>
</feature>
<feature type="sequence variant" id="VAR_047382" description="In dbSNP:rs34932823.">
    <original>E</original>
    <variation>D</variation>
    <location>
        <position position="1326"/>
    </location>
</feature>
<feature type="sequence variant" id="VAR_030170" description="In dbSNP:rs370429.">
    <original>T</original>
    <variation>I</variation>
    <location>
        <position position="1543"/>
    </location>
</feature>
<feature type="sequence variant" id="VAR_047383" description="In dbSNP:rs36113670.">
    <original>K</original>
    <variation>N</variation>
    <location>
        <position position="1701"/>
    </location>
</feature>
<feature type="sequence variant" id="VAR_047384" description="In dbSNP:rs35789133.">
    <original>N</original>
    <variation>D</variation>
    <location>
        <position position="1865"/>
    </location>
</feature>
<feature type="mutagenesis site" description="Phosphomimetic mutant." evidence="32">
    <original>S</original>
    <variation>D</variation>
    <location>
        <position position="372"/>
    </location>
</feature>
<feature type="sequence conflict" description="In Ref. 1; AAA60120." evidence="41" ref="1">
    <original>R</original>
    <variation>RG</variation>
    <location>
        <position position="294"/>
    </location>
</feature>
<feature type="sequence conflict" description="In Ref. 1; AAA60120." evidence="41" ref="1">
    <original>EQ</original>
    <variation>DE</variation>
    <location>
        <begin position="311"/>
        <end position="312"/>
    </location>
</feature>
<feature type="sequence conflict" description="In Ref. 3; AAH27477." evidence="41" ref="3">
    <original>E</original>
    <variation>K</variation>
    <location>
        <position position="405"/>
    </location>
</feature>
<feature type="sequence conflict" description="In Ref. 3; AAH27477/AAH65022." evidence="41" ref="3">
    <original>Q</original>
    <variation>K</variation>
    <location>
        <position position="408"/>
    </location>
</feature>
<feature type="sequence conflict" description="In Ref. 1; AAA60120." evidence="41" ref="1">
    <original>SV</original>
    <variation>CL</variation>
    <location>
        <begin position="447"/>
        <end position="448"/>
    </location>
</feature>
<feature type="sequence conflict" description="In Ref. 1; AAA60120." evidence="41" ref="1">
    <original>Q</original>
    <variation>H</variation>
    <location>
        <position position="760"/>
    </location>
</feature>
<feature type="sequence conflict" description="In Ref. 1; AAA60120." evidence="41" ref="1">
    <original>G</original>
    <variation>R</variation>
    <location>
        <position position="946"/>
    </location>
</feature>
<feature type="sequence conflict" description="In Ref. 1; AAA60120." evidence="41" ref="1">
    <original>R</original>
    <variation>T</variation>
    <location>
        <position position="952"/>
    </location>
</feature>
<feature type="sequence conflict" description="In Ref. 1; AAA60120." evidence="41" ref="1">
    <location>
        <position position="1004"/>
    </location>
</feature>
<feature type="sequence conflict" description="In Ref. 1; AAA60120." evidence="41" ref="1">
    <original>Q</original>
    <variation>R</variation>
    <location>
        <position position="1086"/>
    </location>
</feature>
<feature type="sequence conflict" description="In Ref. 1; AAA60120." evidence="41" ref="1">
    <original>Q</original>
    <variation>R</variation>
    <location>
        <position position="1168"/>
    </location>
</feature>
<feature type="sequence conflict" description="In Ref. 1; AAA60120." evidence="41" ref="1">
    <original>N</original>
    <variation>I</variation>
    <location>
        <position position="1169"/>
    </location>
</feature>
<feature type="sequence conflict" description="In Ref. 1; AAA60120." evidence="41" ref="1">
    <original>S</original>
    <variation>L</variation>
    <location>
        <position position="1170"/>
    </location>
</feature>
<feature type="sequence conflict" description="In Ref. 1; AAA60120." evidence="41" ref="1">
    <original>V</original>
    <variation>L</variation>
    <location>
        <position position="1342"/>
    </location>
</feature>
<feature type="sequence conflict" description="In Ref. 1; AAA60120." evidence="41" ref="1">
    <original>R</original>
    <variation>Q</variation>
    <location>
        <position position="1382"/>
    </location>
</feature>
<feature type="sequence conflict" description="In Ref. 4; BAC03656." evidence="41" ref="4">
    <original>T</original>
    <variation>A</variation>
    <location>
        <position position="1532"/>
    </location>
</feature>
<feature type="sequence conflict" description="In Ref. 4; BAC03656." evidence="41" ref="4">
    <original>S</original>
    <variation>G</variation>
    <location>
        <position position="1849"/>
    </location>
</feature>
<feature type="sequence conflict" description="In Ref. 1; AAA60120." evidence="41" ref="1">
    <original>PLEREATSKNDQ</original>
    <variation>HWNEKPLVKMTK</variation>
    <location>
        <begin position="1853"/>
        <end position="1864"/>
    </location>
</feature>
<feature type="sequence conflict" description="In Ref. 1; AAA60120." evidence="41" ref="1">
    <original>C</original>
    <variation>S</variation>
    <location>
        <position position="1872"/>
    </location>
</feature>
<feature type="sequence conflict" description="In Ref. 4; BAC03656." evidence="41" ref="4">
    <original>E</original>
    <variation>V</variation>
    <location>
        <position position="1988"/>
    </location>
</feature>
<feature type="sequence conflict" description="In Ref. 1; AAA60120." evidence="41" ref="1">
    <original>I</original>
    <variation>M</variation>
    <location>
        <position position="1998"/>
    </location>
</feature>
<reference key="1">
    <citation type="journal article" date="1994" name="J. Cell Biol.">
        <title>PCM-1, A 228-kD centrosome autoantigen with a distinct cell cycle distribution.</title>
        <authorList>
            <person name="Balczon R."/>
            <person name="Bao L."/>
            <person name="Zimmer W.E."/>
        </authorList>
    </citation>
    <scope>NUCLEOTIDE SEQUENCE [MRNA] (ISOFORM 1)</scope>
    <scope>SUBCELLULAR LOCATION</scope>
    <scope>VARIANTS SER-159 AND VAL-597</scope>
    <source>
        <tissue>Liver</tissue>
    </source>
</reference>
<reference key="2">
    <citation type="journal article" date="2006" name="Nature">
        <title>DNA sequence and analysis of human chromosome 8.</title>
        <authorList>
            <person name="Nusbaum C."/>
            <person name="Mikkelsen T.S."/>
            <person name="Zody M.C."/>
            <person name="Asakawa S."/>
            <person name="Taudien S."/>
            <person name="Garber M."/>
            <person name="Kodira C.D."/>
            <person name="Schueler M.G."/>
            <person name="Shimizu A."/>
            <person name="Whittaker C.A."/>
            <person name="Chang J.L."/>
            <person name="Cuomo C.A."/>
            <person name="Dewar K."/>
            <person name="FitzGerald M.G."/>
            <person name="Yang X."/>
            <person name="Allen N.R."/>
            <person name="Anderson S."/>
            <person name="Asakawa T."/>
            <person name="Blechschmidt K."/>
            <person name="Bloom T."/>
            <person name="Borowsky M.L."/>
            <person name="Butler J."/>
            <person name="Cook A."/>
            <person name="Corum B."/>
            <person name="DeArellano K."/>
            <person name="DeCaprio D."/>
            <person name="Dooley K.T."/>
            <person name="Dorris L. III"/>
            <person name="Engels R."/>
            <person name="Gloeckner G."/>
            <person name="Hafez N."/>
            <person name="Hagopian D.S."/>
            <person name="Hall J.L."/>
            <person name="Ishikawa S.K."/>
            <person name="Jaffe D.B."/>
            <person name="Kamat A."/>
            <person name="Kudoh J."/>
            <person name="Lehmann R."/>
            <person name="Lokitsang T."/>
            <person name="Macdonald P."/>
            <person name="Major J.E."/>
            <person name="Matthews C.D."/>
            <person name="Mauceli E."/>
            <person name="Menzel U."/>
            <person name="Mihalev A.H."/>
            <person name="Minoshima S."/>
            <person name="Murayama Y."/>
            <person name="Naylor J.W."/>
            <person name="Nicol R."/>
            <person name="Nguyen C."/>
            <person name="O'Leary S.B."/>
            <person name="O'Neill K."/>
            <person name="Parker S.C.J."/>
            <person name="Polley A."/>
            <person name="Raymond C.K."/>
            <person name="Reichwald K."/>
            <person name="Rodriguez J."/>
            <person name="Sasaki T."/>
            <person name="Schilhabel M."/>
            <person name="Siddiqui R."/>
            <person name="Smith C.L."/>
            <person name="Sneddon T.P."/>
            <person name="Talamas J.A."/>
            <person name="Tenzin P."/>
            <person name="Topham K."/>
            <person name="Venkataraman V."/>
            <person name="Wen G."/>
            <person name="Yamazaki S."/>
            <person name="Young S.K."/>
            <person name="Zeng Q."/>
            <person name="Zimmer A.R."/>
            <person name="Rosenthal A."/>
            <person name="Birren B.W."/>
            <person name="Platzer M."/>
            <person name="Shimizu N."/>
            <person name="Lander E.S."/>
        </authorList>
    </citation>
    <scope>NUCLEOTIDE SEQUENCE [LARGE SCALE GENOMIC DNA]</scope>
</reference>
<reference key="3">
    <citation type="journal article" date="2004" name="Genome Res.">
        <title>The status, quality, and expansion of the NIH full-length cDNA project: the Mammalian Gene Collection (MGC).</title>
        <authorList>
            <consortium name="The MGC Project Team"/>
        </authorList>
    </citation>
    <scope>NUCLEOTIDE SEQUENCE [LARGE SCALE MRNA] (ISOFORM 3)</scope>
    <scope>NUCLEOTIDE SEQUENCE [LARGE SCALE MRNA] OF 1-404 (ISOFORMS 1/2)</scope>
    <scope>VARIANT SER-159</scope>
    <source>
        <tissue>Lung</tissue>
        <tissue>Testis</tissue>
        <tissue>Uterus</tissue>
    </source>
</reference>
<reference key="4">
    <citation type="journal article" date="2004" name="Nat. Genet.">
        <title>Complete sequencing and characterization of 21,243 full-length human cDNAs.</title>
        <authorList>
            <person name="Ota T."/>
            <person name="Suzuki Y."/>
            <person name="Nishikawa T."/>
            <person name="Otsuki T."/>
            <person name="Sugiyama T."/>
            <person name="Irie R."/>
            <person name="Wakamatsu A."/>
            <person name="Hayashi K."/>
            <person name="Sato H."/>
            <person name="Nagai K."/>
            <person name="Kimura K."/>
            <person name="Makita H."/>
            <person name="Sekine M."/>
            <person name="Obayashi M."/>
            <person name="Nishi T."/>
            <person name="Shibahara T."/>
            <person name="Tanaka T."/>
            <person name="Ishii S."/>
            <person name="Yamamoto J."/>
            <person name="Saito K."/>
            <person name="Kawai Y."/>
            <person name="Isono Y."/>
            <person name="Nakamura Y."/>
            <person name="Nagahari K."/>
            <person name="Murakami K."/>
            <person name="Yasuda T."/>
            <person name="Iwayanagi T."/>
            <person name="Wagatsuma M."/>
            <person name="Shiratori A."/>
            <person name="Sudo H."/>
            <person name="Hosoiri T."/>
            <person name="Kaku Y."/>
            <person name="Kodaira H."/>
            <person name="Kondo H."/>
            <person name="Sugawara M."/>
            <person name="Takahashi M."/>
            <person name="Kanda K."/>
            <person name="Yokoi T."/>
            <person name="Furuya T."/>
            <person name="Kikkawa E."/>
            <person name="Omura Y."/>
            <person name="Abe K."/>
            <person name="Kamihara K."/>
            <person name="Katsuta N."/>
            <person name="Sato K."/>
            <person name="Tanikawa M."/>
            <person name="Yamazaki M."/>
            <person name="Ninomiya K."/>
            <person name="Ishibashi T."/>
            <person name="Yamashita H."/>
            <person name="Murakawa K."/>
            <person name="Fujimori K."/>
            <person name="Tanai H."/>
            <person name="Kimata M."/>
            <person name="Watanabe M."/>
            <person name="Hiraoka S."/>
            <person name="Chiba Y."/>
            <person name="Ishida S."/>
            <person name="Ono Y."/>
            <person name="Takiguchi S."/>
            <person name="Watanabe S."/>
            <person name="Yosida M."/>
            <person name="Hotuta T."/>
            <person name="Kusano J."/>
            <person name="Kanehori K."/>
            <person name="Takahashi-Fujii A."/>
            <person name="Hara H."/>
            <person name="Tanase T.-O."/>
            <person name="Nomura Y."/>
            <person name="Togiya S."/>
            <person name="Komai F."/>
            <person name="Hara R."/>
            <person name="Takeuchi K."/>
            <person name="Arita M."/>
            <person name="Imose N."/>
            <person name="Musashino K."/>
            <person name="Yuuki H."/>
            <person name="Oshima A."/>
            <person name="Sasaki N."/>
            <person name="Aotsuka S."/>
            <person name="Yoshikawa Y."/>
            <person name="Matsunawa H."/>
            <person name="Ichihara T."/>
            <person name="Shiohata N."/>
            <person name="Sano S."/>
            <person name="Moriya S."/>
            <person name="Momiyama H."/>
            <person name="Satoh N."/>
            <person name="Takami S."/>
            <person name="Terashima Y."/>
            <person name="Suzuki O."/>
            <person name="Nakagawa S."/>
            <person name="Senoh A."/>
            <person name="Mizoguchi H."/>
            <person name="Goto Y."/>
            <person name="Shimizu F."/>
            <person name="Wakebe H."/>
            <person name="Hishigaki H."/>
            <person name="Watanabe T."/>
            <person name="Sugiyama A."/>
            <person name="Takemoto M."/>
            <person name="Kawakami B."/>
            <person name="Yamazaki M."/>
            <person name="Watanabe K."/>
            <person name="Kumagai A."/>
            <person name="Itakura S."/>
            <person name="Fukuzumi Y."/>
            <person name="Fujimori Y."/>
            <person name="Komiyama M."/>
            <person name="Tashiro H."/>
            <person name="Tanigami A."/>
            <person name="Fujiwara T."/>
            <person name="Ono T."/>
            <person name="Yamada K."/>
            <person name="Fujii Y."/>
            <person name="Ozaki K."/>
            <person name="Hirao M."/>
            <person name="Ohmori Y."/>
            <person name="Kawabata A."/>
            <person name="Hikiji T."/>
            <person name="Kobatake N."/>
            <person name="Inagaki H."/>
            <person name="Ikema Y."/>
            <person name="Okamoto S."/>
            <person name="Okitani R."/>
            <person name="Kawakami T."/>
            <person name="Noguchi S."/>
            <person name="Itoh T."/>
            <person name="Shigeta K."/>
            <person name="Senba T."/>
            <person name="Matsumura K."/>
            <person name="Nakajima Y."/>
            <person name="Mizuno T."/>
            <person name="Morinaga M."/>
            <person name="Sasaki M."/>
            <person name="Togashi T."/>
            <person name="Oyama M."/>
            <person name="Hata H."/>
            <person name="Watanabe M."/>
            <person name="Komatsu T."/>
            <person name="Mizushima-Sugano J."/>
            <person name="Satoh T."/>
            <person name="Shirai Y."/>
            <person name="Takahashi Y."/>
            <person name="Nakagawa K."/>
            <person name="Okumura K."/>
            <person name="Nagase T."/>
            <person name="Nomura N."/>
            <person name="Kikuchi H."/>
            <person name="Masuho Y."/>
            <person name="Yamashita R."/>
            <person name="Nakai K."/>
            <person name="Yada T."/>
            <person name="Nakamura Y."/>
            <person name="Ohara O."/>
            <person name="Isogai T."/>
            <person name="Sugano S."/>
        </authorList>
    </citation>
    <scope>NUCLEOTIDE SEQUENCE [LARGE SCALE MRNA] OF 1244-2024 (ISOFORM 2)</scope>
    <source>
        <tissue>Brain</tissue>
    </source>
</reference>
<reference key="5">
    <citation type="journal article" date="2000" name="Oncogene">
        <title>RET/PCM-1: a novel fusion gene in papillary thyroid carcinoma.</title>
        <authorList>
            <person name="Corvi R."/>
            <person name="Berger N."/>
            <person name="Balczon R."/>
            <person name="Romeo G."/>
        </authorList>
    </citation>
    <scope>NUCLEOTIDE SEQUENCE [MRNA] OF 1527-1610 (ISOFORMS 1/2)</scope>
    <scope>SUBCELLULAR LOCATION</scope>
    <scope>TISSUE SPECIFICITY</scope>
    <scope>CHROMOSOMAL TRANSLOCATION WITH RET</scope>
</reference>
<reference key="6">
    <citation type="journal article" date="1997" name="Hum. Mol. Genet.">
        <title>Huntingtin-associated protein 1 (HAP1) interacts with the p150Glued subunit of dynactin.</title>
        <authorList>
            <person name="Engelender S."/>
            <person name="Sharp A.H."/>
            <person name="Colomer V."/>
            <person name="Tokito M.K."/>
            <person name="Lanahan A."/>
            <person name="Worley P."/>
            <person name="Holzbaur E.L.F."/>
            <person name="Ross C.A."/>
        </authorList>
    </citation>
    <scope>INTERACTION WITH HAP1</scope>
</reference>
<reference key="7">
    <citation type="journal article" date="2002" name="J. Cell Biol.">
        <title>Assembly of centrosomal proteins and microtubule organization depends on PCM-1.</title>
        <authorList>
            <person name="Dammermann A."/>
            <person name="Merdes A."/>
        </authorList>
    </citation>
    <scope>FUNCTION</scope>
    <scope>INTERACTION WITH CETN3</scope>
    <scope>SUBCELLULAR LOCATION</scope>
</reference>
<reference key="8">
    <citation type="journal article" date="2003" name="Nature">
        <title>Proteomic characterization of the human centrosome by protein correlation profiling.</title>
        <authorList>
            <person name="Andersen J.S."/>
            <person name="Wilkinson C.J."/>
            <person name="Mayor T."/>
            <person name="Mortensen P."/>
            <person name="Nigg E.A."/>
            <person name="Mann M."/>
        </authorList>
    </citation>
    <scope>IDENTIFICATION BY MASS SPECTROMETRY</scope>
    <scope>SUBCELLULAR LOCATION [LARGE SCALE ANALYSIS]</scope>
    <source>
        <tissue>Lymphoblast</tissue>
    </source>
</reference>
<reference key="9">
    <citation type="journal article" date="2003" name="Nature">
        <title>Basal body dysfunction is a likely cause of pleiotropic Bardet-Biedl syndrome.</title>
        <authorList>
            <person name="Ansley S.J."/>
            <person name="Badano J.L."/>
            <person name="Blacque O.E."/>
            <person name="Hill J."/>
            <person name="Hoskins B.E."/>
            <person name="Leitch C.C."/>
            <person name="Kim J.C."/>
            <person name="Ross A.J."/>
            <person name="Eichers E.R."/>
            <person name="Teslovich T.M."/>
            <person name="Mah A.K."/>
            <person name="Johnsen R.C."/>
            <person name="Cavender J.C."/>
            <person name="Lewis R.A."/>
            <person name="Leroux M.R."/>
            <person name="Beales P.L."/>
            <person name="Katsanis N."/>
        </authorList>
    </citation>
    <scope>INTERACTION WITH BBS8</scope>
    <scope>SUBCELLULAR LOCATION</scope>
</reference>
<reference key="10">
    <citation type="journal article" date="2004" name="Anal. Chem.">
        <title>Robust phosphoproteomic profiling of tyrosine phosphorylation sites from human T cells using immobilized metal affinity chromatography and tandem mass spectrometry.</title>
        <authorList>
            <person name="Brill L.M."/>
            <person name="Salomon A.R."/>
            <person name="Ficarro S.B."/>
            <person name="Mukherji M."/>
            <person name="Stettler-Gill M."/>
            <person name="Peters E.C."/>
        </authorList>
    </citation>
    <scope>PHOSPHORYLATION [LARGE SCALE ANALYSIS] AT SER-65</scope>
    <scope>IDENTIFICATION BY MASS SPECTROMETRY [LARGE SCALE ANALYSIS]</scope>
    <source>
        <tissue>Leukemic T-cell</tissue>
    </source>
</reference>
<reference key="11">
    <citation type="journal article" date="2004" name="Nat. Genet.">
        <title>The Bardet-Biedl protein BBS4 targets cargo to the pericentriolar region and is required for microtubule anchoring and cell cycle progression.</title>
        <authorList>
            <person name="Kim J.C."/>
            <person name="Badano J.L."/>
            <person name="Sibold S."/>
            <person name="Esmail M.A."/>
            <person name="Hill J."/>
            <person name="Hoskins B.E."/>
            <person name="Leitch C.C."/>
            <person name="Venner K."/>
            <person name="Ansley S.J."/>
            <person name="Ross A.J."/>
            <person name="Leroux M.R."/>
            <person name="Katsanis N."/>
            <person name="Beales P.L."/>
        </authorList>
    </citation>
    <scope>INTERACTION WITH BBS4</scope>
    <scope>SUBCELLULAR LOCATION</scope>
</reference>
<reference key="12">
    <citation type="journal article" date="2004" name="Oncogene">
        <title>Candidate tumor-suppressor genes on chromosome arm 8p in early-onset and high-grade breast cancers.</title>
        <authorList>
            <person name="Armes J.E."/>
            <person name="Hammet F."/>
            <person name="de Silva M."/>
            <person name="Ciciulla J."/>
            <person name="Ramus S.J."/>
            <person name="Soo W.-K."/>
            <person name="Mahoney A."/>
            <person name="Yarovaya N."/>
            <person name="Henderson M.A."/>
            <person name="Gish K."/>
            <person name="Hutchins A.-M."/>
            <person name="Price G.R."/>
            <person name="Venter D.J."/>
        </authorList>
    </citation>
    <scope>TISSUE SPECIFICITY</scope>
    <scope>INDUCTION</scope>
</reference>
<reference key="13">
    <citation type="journal article" date="2005" name="Cancer">
        <title>Five genes from chromosomal band 8p22 are significantly down-regulated in ovarian carcinoma: N33 and EFA6R have a potential impact on overall survival.</title>
        <authorList>
            <person name="Pils D."/>
            <person name="Horak P."/>
            <person name="Gleiss A."/>
            <person name="Sax C."/>
            <person name="Fabjani G."/>
            <person name="Moebus V.J."/>
            <person name="Zielinski C."/>
            <person name="Reinthaller A."/>
            <person name="Zeillinger R."/>
            <person name="Krainer M."/>
        </authorList>
    </citation>
    <scope>TISSUE SPECIFICITY</scope>
    <scope>INDUCTION</scope>
</reference>
<reference key="14">
    <citation type="journal article" date="2005" name="Cancer Res.">
        <title>The t(8;9)(p22;p24) is a recurrent abnormality in chronic and acute leukemia that fuses PCM1 to JAK2.</title>
        <authorList>
            <person name="Reiter A."/>
            <person name="Walz C."/>
            <person name="Watmore A."/>
            <person name="Schoch C."/>
            <person name="Blau I."/>
            <person name="Schlegelberger B."/>
            <person name="Berger U."/>
            <person name="Telford N."/>
            <person name="Aruliah S."/>
            <person name="Yin J.A."/>
            <person name="Vanstraelen D."/>
            <person name="Barker H.F."/>
            <person name="Taylor P.C."/>
            <person name="O'Driscoll A."/>
            <person name="Benedetti F."/>
            <person name="Rudolph C."/>
            <person name="Kolb H.-J."/>
            <person name="Hochhaus A."/>
            <person name="Hehlmann R."/>
            <person name="Chase A."/>
            <person name="Cross N.C.P."/>
        </authorList>
    </citation>
    <scope>CHROMOSOMAL TRANSLOCATION WITH JAK2</scope>
</reference>
<reference key="15">
    <citation type="journal article" date="2005" name="Leukemia">
        <title>PCM1-JAK2 fusion in myeloproliferative disorders and acute erythroid leukemia with t(8;9) translocation.</title>
        <authorList>
            <person name="Murati A."/>
            <person name="Gelsi-Boyer V."/>
            <person name="Adelaide J."/>
            <person name="Perot C."/>
            <person name="Talmant P."/>
            <person name="Giraudier S."/>
            <person name="Lode L."/>
            <person name="Letessier A."/>
            <person name="Delaval B."/>
            <person name="Brunel V."/>
            <person name="Imbert M."/>
            <person name="Garand R."/>
            <person name="Xerri L."/>
            <person name="Birnbaum D."/>
            <person name="Mozziconacci M.-J."/>
            <person name="Chaffanet M."/>
        </authorList>
    </citation>
    <scope>CHROMOSOMAL TRANSLOCATION WITH JAK2</scope>
</reference>
<reference key="16">
    <citation type="journal article" date="2005" name="Mol. Biol. Cell">
        <title>Dynamic recruitment of Nek2 kinase to the centrosome involves microtubules, PCM-1, and localized proteasomal degradation.</title>
        <authorList>
            <person name="Hames R.S."/>
            <person name="Crookes R.E."/>
            <person name="Straatman K.R."/>
            <person name="Merdes A."/>
            <person name="Hayes M.J."/>
            <person name="Faragher A.J."/>
            <person name="Fry A.M."/>
        </authorList>
    </citation>
    <scope>FUNCTION</scope>
    <scope>SUBCELLULAR LOCATION</scope>
</reference>
<reference key="17">
    <citation type="journal article" date="2005" name="Oncogene">
        <title>The t(8;9)(p22;p24) translocation in atypical chronic myeloid leukaemia yields a new PCM1-JAK2 fusion gene.</title>
        <authorList>
            <person name="Bousquet M."/>
            <person name="Quelen C."/>
            <person name="De Mas V."/>
            <person name="Duchayne E."/>
            <person name="Roquefeuil B."/>
            <person name="Delsol G."/>
            <person name="Laurent G."/>
            <person name="Dastugue N."/>
            <person name="Brousset P."/>
        </authorList>
    </citation>
    <scope>CHROMOSOMAL TRANSLOCATION WITH JAK2</scope>
</reference>
<reference key="18">
    <citation type="journal article" date="2006" name="Cell">
        <title>Global, in vivo, and site-specific phosphorylation dynamics in signaling networks.</title>
        <authorList>
            <person name="Olsen J.V."/>
            <person name="Blagoev B."/>
            <person name="Gnad F."/>
            <person name="Macek B."/>
            <person name="Kumar C."/>
            <person name="Mortensen P."/>
            <person name="Mann M."/>
        </authorList>
    </citation>
    <scope>PHOSPHORYLATION [LARGE SCALE ANALYSIS] AT SER-65; SER-110 AND SER-1730</scope>
    <scope>IDENTIFICATION BY MASS SPECTROMETRY [LARGE SCALE ANALYSIS]</scope>
    <source>
        <tissue>Cervix carcinoma</tissue>
    </source>
</reference>
<reference key="19">
    <citation type="journal article" date="2006" name="Haematologica">
        <title>A combination of cytomorphology, cytogenetic analysis, fluorescence in situ hybridization and reverse transcriptase polymerase chain reaction for establishing clonality in cases of persisting hypereosinophilia.</title>
        <authorList>
            <person name="Bacher U."/>
            <person name="Reiter A."/>
            <person name="Haferlach T."/>
            <person name="Mueller L."/>
            <person name="Schnittger S."/>
            <person name="Kern W."/>
            <person name="Schoch C."/>
        </authorList>
    </citation>
    <scope>CHROMOSOMAL TRANSLOCATION WITH JAK2</scope>
</reference>
<reference key="20">
    <citation type="journal article" date="2006" name="J. Cell Biol.">
        <title>Inhibition of centrosome protein assembly leads to p53-dependent exit from the cell cycle.</title>
        <authorList>
            <person name="Srsen V."/>
            <person name="Gnadt N."/>
            <person name="Dammermann A."/>
            <person name="Merdes A."/>
        </authorList>
    </citation>
    <scope>FUNCTION</scope>
    <scope>SUBCELLULAR LOCATION</scope>
</reference>
<reference key="21">
    <citation type="journal article" date="2006" name="Leukemia">
        <title>A t(8;9) translocation with PCM1-JAK2 fusion in a patient with T-cell lymphoma.</title>
        <authorList>
            <person name="Adelaide J."/>
            <person name="Perot C."/>
            <person name="Gelsi-Boyer V."/>
            <person name="Pautas C."/>
            <person name="Murati A."/>
            <person name="Copie-Bergman C."/>
            <person name="Imbert M."/>
            <person name="Chaffanet M."/>
            <person name="Birnbaum D."/>
            <person name="Mozziconacci M.-J."/>
        </authorList>
    </citation>
    <scope>TISSUE SPECIFICITY</scope>
    <scope>CHROMOSOMAL TRANSLOCATION WITH JAK2</scope>
</reference>
<reference key="22">
    <citation type="journal article" date="2006" name="Mol. Biol. Cell">
        <title>Nudel contributes to microtubule anchoring at the mother centriole and is involved in both dynein-dependent and -independent centrosomal protein assembly.</title>
        <authorList>
            <person name="Guo J."/>
            <person name="Yang Z."/>
            <person name="Song W."/>
            <person name="Chen Q."/>
            <person name="Wang F."/>
            <person name="Zhang Q."/>
            <person name="Zhu X."/>
        </authorList>
    </citation>
    <scope>INTERACTION WITH NDE1 AND NDEL1</scope>
    <scope>SUBCELLULAR LOCATION</scope>
</reference>
<reference key="23">
    <citation type="journal article" date="2006" name="Nat. Biotechnol.">
        <title>A probability-based approach for high-throughput protein phosphorylation analysis and site localization.</title>
        <authorList>
            <person name="Beausoleil S.A."/>
            <person name="Villen J."/>
            <person name="Gerber S.A."/>
            <person name="Rush J."/>
            <person name="Gygi S.P."/>
        </authorList>
    </citation>
    <scope>PHOSPHORYLATION [LARGE SCALE ANALYSIS] AT SER-65; SER-68 AND SER-69</scope>
    <scope>IDENTIFICATION BY MASS SPECTROMETRY [LARGE SCALE ANALYSIS]</scope>
    <source>
        <tissue>Cervix carcinoma</tissue>
    </source>
</reference>
<reference key="24">
    <citation type="journal article" date="2008" name="Proc. Natl. Acad. Sci. U.S.A.">
        <title>A quantitative atlas of mitotic phosphorylation.</title>
        <authorList>
            <person name="Dephoure N."/>
            <person name="Zhou C."/>
            <person name="Villen J."/>
            <person name="Beausoleil S.A."/>
            <person name="Bakalarski C.E."/>
            <person name="Elledge S.J."/>
            <person name="Gygi S.P."/>
        </authorList>
    </citation>
    <scope>PHOSPHORYLATION [LARGE SCALE ANALYSIS] AT SER-65; SER-68; SER-69; SER-93; SER-960; SER-1231; SER-1257; SER-1260; SER-1263; SER-1730; SER-1765; SER-1768 AND SER-1776</scope>
    <scope>IDENTIFICATION BY MASS SPECTROMETRY [LARGE SCALE ANALYSIS]</scope>
    <source>
        <tissue>Cervix carcinoma</tissue>
    </source>
</reference>
<reference key="25">
    <citation type="journal article" date="2009" name="Anal. Chem.">
        <title>Lys-N and trypsin cover complementary parts of the phosphoproteome in a refined SCX-based approach.</title>
        <authorList>
            <person name="Gauci S."/>
            <person name="Helbig A.O."/>
            <person name="Slijper M."/>
            <person name="Krijgsveld J."/>
            <person name="Heck A.J."/>
            <person name="Mohammed S."/>
        </authorList>
    </citation>
    <scope>IDENTIFICATION BY MASS SPECTROMETRY [LARGE SCALE ANALYSIS]</scope>
</reference>
<reference key="26">
    <citation type="journal article" date="2009" name="Sci. Signal.">
        <title>Quantitative phosphoproteomic analysis of T cell receptor signaling reveals system-wide modulation of protein-protein interactions.</title>
        <authorList>
            <person name="Mayya V."/>
            <person name="Lundgren D.H."/>
            <person name="Hwang S.-I."/>
            <person name="Rezaul K."/>
            <person name="Wu L."/>
            <person name="Eng J.K."/>
            <person name="Rodionov V."/>
            <person name="Han D.K."/>
        </authorList>
    </citation>
    <scope>PHOSPHORYLATION [LARGE SCALE ANALYSIS] AT SER-65; SER-68; SER-69; SER-93; SER-1185; SER-1697; SER-1765; SER-1768; SER-1776 AND SER-1977</scope>
    <scope>IDENTIFICATION BY MASS SPECTROMETRY [LARGE SCALE ANALYSIS]</scope>
    <source>
        <tissue>Leukemic T-cell</tissue>
    </source>
</reference>
<reference key="27">
    <citation type="journal article" date="2009" name="Science">
        <title>Lysine acetylation targets protein complexes and co-regulates major cellular functions.</title>
        <authorList>
            <person name="Choudhary C."/>
            <person name="Kumar C."/>
            <person name="Gnad F."/>
            <person name="Nielsen M.L."/>
            <person name="Rehman M."/>
            <person name="Walther T.C."/>
            <person name="Olsen J.V."/>
            <person name="Mann M."/>
        </authorList>
    </citation>
    <scope>ACETYLATION [LARGE SCALE ANALYSIS] AT LYS-399</scope>
    <scope>IDENTIFICATION BY MASS SPECTROMETRY [LARGE SCALE ANALYSIS]</scope>
</reference>
<reference key="28">
    <citation type="journal article" date="2010" name="J. Cell Sci.">
        <title>Control of ciliogenesis by FOR20, a novel centrosome and pericentriolar satellite protein.</title>
        <authorList>
            <person name="Sedjai F."/>
            <person name="Acquaviva C."/>
            <person name="Chevrier V."/>
            <person name="Chauvin J.P."/>
            <person name="Coppin E."/>
            <person name="Aouane A."/>
            <person name="Coulier F."/>
            <person name="Tolun A."/>
            <person name="Pierres M."/>
            <person name="Birnbaum D."/>
            <person name="Rosnet O."/>
        </authorList>
    </citation>
    <scope>FUNCTION</scope>
</reference>
<reference key="29">
    <citation type="journal article" date="2010" name="Mol. Biol. Cell">
        <title>Par6 alpha interacts with the dynactin subunit p150 Glued and is a critical regulator of centrosomal protein recruitment.</title>
        <authorList>
            <person name="Kodani A."/>
            <person name="Tonthat V."/>
            <person name="Wu B."/>
            <person name="Suetterlin C."/>
        </authorList>
    </citation>
    <scope>INTERACTION WITH PARD6A</scope>
    <scope>SUBCELLULAR LOCATION</scope>
</reference>
<reference key="30">
    <citation type="journal article" date="2010" name="Sci. Signal.">
        <title>Quantitative phosphoproteomics reveals widespread full phosphorylation site occupancy during mitosis.</title>
        <authorList>
            <person name="Olsen J.V."/>
            <person name="Vermeulen M."/>
            <person name="Santamaria A."/>
            <person name="Kumar C."/>
            <person name="Miller M.L."/>
            <person name="Jensen L.J."/>
            <person name="Gnad F."/>
            <person name="Cox J."/>
            <person name="Jensen T.S."/>
            <person name="Nigg E.A."/>
            <person name="Brunak S."/>
            <person name="Mann M."/>
        </authorList>
    </citation>
    <scope>PHOSPHORYLATION [LARGE SCALE ANALYSIS] AT SER-65; SER-68; SER-69; SER-93; SER-861; SER-960 AND SER-1730</scope>
    <scope>IDENTIFICATION BY MASS SPECTROMETRY [LARGE SCALE ANALYSIS]</scope>
    <source>
        <tissue>Cervix carcinoma</tissue>
    </source>
</reference>
<reference key="31">
    <citation type="journal article" date="2011" name="BMC Syst. Biol.">
        <title>Initial characterization of the human central proteome.</title>
        <authorList>
            <person name="Burkard T.R."/>
            <person name="Planyavsky M."/>
            <person name="Kaupe I."/>
            <person name="Breitwieser F.P."/>
            <person name="Buerckstuemmer T."/>
            <person name="Bennett K.L."/>
            <person name="Superti-Furga G."/>
            <person name="Colinge J."/>
        </authorList>
    </citation>
    <scope>IDENTIFICATION BY MASS SPECTROMETRY [LARGE SCALE ANALYSIS]</scope>
</reference>
<reference key="32">
    <citation type="journal article" date="2011" name="Sci. Signal.">
        <title>System-wide temporal characterization of the proteome and phosphoproteome of human embryonic stem cell differentiation.</title>
        <authorList>
            <person name="Rigbolt K.T."/>
            <person name="Prokhorova T.A."/>
            <person name="Akimov V."/>
            <person name="Henningsen J."/>
            <person name="Johansen P.T."/>
            <person name="Kratchmarova I."/>
            <person name="Kassem M."/>
            <person name="Mann M."/>
            <person name="Olsen J.V."/>
            <person name="Blagoev B."/>
        </authorList>
    </citation>
    <scope>PHOSPHORYLATION [LARGE SCALE ANALYSIS] AT SER-65; SER-68; SER-1730; SER-1765; SER-1768 AND SER-1958</scope>
    <scope>IDENTIFICATION BY MASS SPECTROMETRY [LARGE SCALE ANALYSIS]</scope>
</reference>
<reference key="33">
    <citation type="journal article" date="2012" name="Mol. Cell. Proteomics">
        <title>Comparative large-scale characterisation of plant vs. mammal proteins reveals similar and idiosyncratic N-alpha acetylation features.</title>
        <authorList>
            <person name="Bienvenut W.V."/>
            <person name="Sumpton D."/>
            <person name="Martinez A."/>
            <person name="Lilla S."/>
            <person name="Espagne C."/>
            <person name="Meinnel T."/>
            <person name="Giglione C."/>
        </authorList>
    </citation>
    <scope>ACETYLATION [LARGE SCALE ANALYSIS] AT ALA-2</scope>
    <scope>CLEAVAGE OF INITIATOR METHIONINE [LARGE SCALE ANALYSIS]</scope>
    <scope>IDENTIFICATION BY MASS SPECTROMETRY [LARGE SCALE ANALYSIS]</scope>
</reference>
<reference key="34">
    <citation type="journal article" date="2013" name="EMBO J.">
        <title>A new cellular stress response that triggers centriolar satellite reorganization and ciliogenesis.</title>
        <authorList>
            <person name="Villumsen B.H."/>
            <person name="Danielsen J.R."/>
            <person name="Povlsen L."/>
            <person name="Sylvestersen K.B."/>
            <person name="Merdes A."/>
            <person name="Beli P."/>
            <person name="Yang Y.G."/>
            <person name="Choudhary C."/>
            <person name="Nielsen M.L."/>
            <person name="Mailand N."/>
            <person name="Bekker-Jensen S."/>
        </authorList>
    </citation>
    <scope>FUNCTION IN CILIOGENESIS</scope>
    <scope>UBIQUITINATION BY MIB1</scope>
    <scope>INTERACTION WITH CEP131</scope>
    <scope>ASSOCIATION WITH MICROTUBULE</scope>
    <scope>SUBCELLULAR LOCATION</scope>
</reference>
<reference key="35">
    <citation type="journal article" date="2013" name="J. Proteome Res.">
        <title>Toward a comprehensive characterization of a human cancer cell phosphoproteome.</title>
        <authorList>
            <person name="Zhou H."/>
            <person name="Di Palma S."/>
            <person name="Preisinger C."/>
            <person name="Peng M."/>
            <person name="Polat A.N."/>
            <person name="Heck A.J."/>
            <person name="Mohammed S."/>
        </authorList>
    </citation>
    <scope>PHOSPHORYLATION [LARGE SCALE ANALYSIS] AT SER-65; SER-68; SER-69; SER-93; SER-110; SER-116; SER-119; SER-370; SER-372; SER-384; SER-588; THR-859; SER-861; SER-960; SER-977; SER-988; SER-991; SER-1229; SER-1231; SER-1257; SER-1697; SER-1730 AND SER-1977</scope>
    <scope>PHOSPHORYLATION [LARGE SCALE ANALYSIS] AT SER-159 (VARIANT SER-159)</scope>
    <scope>VARIANT [LARGE SCALE ANALYSIS] SER-159</scope>
    <scope>IDENTIFICATION BY MASS SPECTROMETRY [LARGE SCALE ANALYSIS]</scope>
    <source>
        <tissue>Cervix carcinoma</tissue>
        <tissue>Erythroleukemia</tissue>
    </source>
</reference>
<reference key="36">
    <citation type="journal article" date="2013" name="Nature">
        <title>Autophagy promotes primary ciliogenesis by removing OFD1 from centriolar satellites.</title>
        <authorList>
            <person name="Tang Z."/>
            <person name="Lin M.G."/>
            <person name="Stowe T.R."/>
            <person name="Chen S."/>
            <person name="Zhu M."/>
            <person name="Stearns T."/>
            <person name="Franco B."/>
            <person name="Zhong Q."/>
        </authorList>
    </citation>
    <scope>INTERACTION WITH MAP1LC3B; GABARAPAL2 AND GABARAP</scope>
</reference>
<reference key="37">
    <citation type="journal article" date="2014" name="J. Cell Sci.">
        <title>Ccdc13 is a novel human centriolar satellite protein required for ciliogenesis and genome stability.</title>
        <authorList>
            <person name="Staples C.J."/>
            <person name="Myers K.N."/>
            <person name="Beveridge R.D."/>
            <person name="Patil A.A."/>
            <person name="Howard A.E."/>
            <person name="Barone G."/>
            <person name="Lee A.J."/>
            <person name="Swanton C."/>
            <person name="Howell M."/>
            <person name="Maslen S."/>
            <person name="Skehel J.M."/>
            <person name="Boulton S.J."/>
            <person name="Collis S.J."/>
        </authorList>
    </citation>
    <scope>INTERACTION WITH CCDC13</scope>
</reference>
<reference key="38">
    <citation type="journal article" date="2014" name="J. Cell Sci.">
        <title>Proteomic analysis of mammalian sperm cells identifies new components of the centrosome.</title>
        <authorList>
            <person name="Firat-Karalar E.N."/>
            <person name="Sante J."/>
            <person name="Elliott S."/>
            <person name="Stearns T."/>
        </authorList>
    </citation>
    <scope>INTERACTION WITH CFAP263</scope>
</reference>
<reference key="39">
    <citation type="journal article" date="2014" name="J. Proteomics">
        <title>An enzyme assisted RP-RPLC approach for in-depth analysis of human liver phosphoproteome.</title>
        <authorList>
            <person name="Bian Y."/>
            <person name="Song C."/>
            <person name="Cheng K."/>
            <person name="Dong M."/>
            <person name="Wang F."/>
            <person name="Huang J."/>
            <person name="Sun D."/>
            <person name="Wang L."/>
            <person name="Ye M."/>
            <person name="Zou H."/>
        </authorList>
    </citation>
    <scope>PHOSPHORYLATION [LARGE SCALE ANALYSIS] AT THR-1468</scope>
    <scope>IDENTIFICATION BY MASS SPECTROMETRY [LARGE SCALE ANALYSIS]</scope>
    <source>
        <tissue>Liver</tissue>
    </source>
</reference>
<reference key="40">
    <citation type="journal article" date="2015" name="Proteomics">
        <title>N-terminome analysis of the human mitochondrial proteome.</title>
        <authorList>
            <person name="Vaca Jacome A.S."/>
            <person name="Rabilloud T."/>
            <person name="Schaeffer-Reiss C."/>
            <person name="Rompais M."/>
            <person name="Ayoub D."/>
            <person name="Lane L."/>
            <person name="Bairoch A."/>
            <person name="Van Dorsselaer A."/>
            <person name="Carapito C."/>
        </authorList>
    </citation>
    <scope>IDENTIFICATION BY MASS SPECTROMETRY [LARGE SCALE ANALYSIS]</scope>
</reference>
<reference key="41">
    <citation type="journal article" date="2016" name="Hum. Mol. Genet.">
        <title>OFIP/KIAA0753 forms a complex with OFD1 and FOR20 at pericentriolar satellites and centrosomes and is mutated in one individual with oral-facial-digital syndrome.</title>
        <authorList>
            <person name="Chevrier V."/>
            <person name="Bruel A.L."/>
            <person name="Van Dam T.J."/>
            <person name="Franco B."/>
            <person name="Lo Scalzo M."/>
            <person name="Lembo F."/>
            <person name="Audebert S."/>
            <person name="Baudelet E."/>
            <person name="Isnardon D."/>
            <person name="Bole A."/>
            <person name="Borg J.P."/>
            <person name="Kuentz P."/>
            <person name="Thevenon J."/>
            <person name="Burglen L."/>
            <person name="Faivre L."/>
            <person name="Riviere J.B."/>
            <person name="Huynen M.A."/>
            <person name="Birnbaum D."/>
            <person name="Rosnet O."/>
            <person name="Thauvin-Robinet C."/>
        </authorList>
    </citation>
    <scope>INTERACTION WITH KIAA0753; CEP20 AND OFD1</scope>
</reference>
<reference key="42">
    <citation type="journal article" date="2016" name="Mol. Biol. Cell">
        <title>Ccdc11 is a novel centriolar satellite protein essential for ciliogenesis and establishment of left-right asymmetry.</title>
        <authorList>
            <person name="Silva E."/>
            <person name="Betleja E."/>
            <person name="John E."/>
            <person name="Spear P."/>
            <person name="Moresco J.J."/>
            <person name="Zhang S."/>
            <person name="Yates J.R. III"/>
            <person name="Mitchell B.J."/>
            <person name="Mahjoub M.R."/>
        </authorList>
    </citation>
    <scope>INTERACTION WITH CFAP53</scope>
</reference>
<reference key="43">
    <citation type="journal article" date="2017" name="J. Biol. Chem.">
        <title>DAZ-interacting Protein 1 (Dzip1) Phosphorylation by Polo-like Kinase 1 (Plk1) Regulates the Centriolar Satellite Localization of the BBSome Protein during the Cell Cycle.</title>
        <authorList>
            <person name="Zhang B."/>
            <person name="Wang G."/>
            <person name="Xu X."/>
            <person name="Yang S."/>
            <person name="Zhuang T."/>
            <person name="Wang G."/>
            <person name="Ren H."/>
            <person name="Cheng S.Y."/>
            <person name="Jiang Q."/>
            <person name="Zhang C."/>
        </authorList>
    </citation>
    <scope>FUNCTION</scope>
    <scope>INTERACTION WITH DZIP1</scope>
    <scope>REGION</scope>
</reference>
<reference key="44">
    <citation type="journal article" date="2017" name="J. Cell Sci.">
        <title>The centriolar satellite protein CCDC66 interacts with CEP290 and functions in cilium formation and trafficking.</title>
        <authorList>
            <person name="Conkar D."/>
            <person name="Culfa E."/>
            <person name="Odabasi E."/>
            <person name="Rauniyar N."/>
            <person name="Yates J.R. III"/>
            <person name="Firat-Karalar E.N."/>
        </authorList>
    </citation>
    <scope>INTERACTION WITH CCDC66</scope>
</reference>
<reference key="45">
    <citation type="journal article" date="2018" name="Nature">
        <title>Kinase-controlled phase transition of membraneless organelles in mitosis.</title>
        <authorList>
            <person name="Rai A.K."/>
            <person name="Chen J.X."/>
            <person name="Selbach M."/>
            <person name="Pelkmans L."/>
        </authorList>
    </citation>
    <scope>PHOSPHORYLATION</scope>
</reference>
<reference key="46">
    <citation type="journal article" date="2019" name="J. Biol. Chem.">
        <title>Polo-like kinase 4 maintains centriolar satellite integrity by phosphorylation of centrosomal protein 131 (CEP131).</title>
        <authorList>
            <person name="Denu R.A."/>
            <person name="Sass M.M."/>
            <person name="Johnson J.M."/>
            <person name="Potts G.K."/>
            <person name="Choudhary A."/>
            <person name="Coon J.J."/>
            <person name="Burkard M.E."/>
        </authorList>
    </citation>
    <scope>PHOSPHORYLATION AT SER-372</scope>
    <scope>MUTAGENESIS OF SER-372</scope>
    <scope>SUBCELLULAR LOCATION</scope>
</reference>
<reference key="47">
    <citation type="journal article" date="2020" name="Biol. Cell">
        <title>hVFL3/CCDC61 is a component of mother centriole subdistal appendages required for centrosome cohesion and positioning.</title>
        <authorList>
            <person name="Pizon V."/>
            <person name="Gaudin N."/>
            <person name="Poteau M."/>
            <person name="Cifuentes-Diaz C."/>
            <person name="Demdou R."/>
            <person name="Heyer V."/>
            <person name="Reina San Martin B."/>
            <person name="Azimzadeh J."/>
        </authorList>
    </citation>
    <scope>INTERACTION WITH CCDC61</scope>
    <scope>SUBCELLULAR LOCATION</scope>
</reference>
<reference key="48">
    <citation type="journal article" date="2020" name="Elife">
        <title>WDR90 is a centriolar microtubule wall protein important for centriole architecture integrity.</title>
        <authorList>
            <person name="Steib E."/>
            <person name="Laporte M.H."/>
            <person name="Gambarotto D."/>
            <person name="Olieric N."/>
            <person name="Zheng C."/>
            <person name="Borgers S."/>
            <person name="Olieric V."/>
            <person name="Le Guennec M."/>
            <person name="Koll F."/>
            <person name="Tassin A.M."/>
            <person name="Steinmetz M.O."/>
            <person name="Guichard P."/>
            <person name="Hamel V."/>
        </authorList>
    </citation>
    <scope>SUBCELLULAR LOCATION</scope>
</reference>
<reference key="49">
    <citation type="journal article" date="2022" name="Cell Res.">
        <title>Regulators of tubulin polyglutamylation control nuclear shape and cilium disassembly by balancing microtubule and actin assembly.</title>
        <authorList>
            <person name="Wang L."/>
            <person name="Paudyal S.C."/>
            <person name="Kang Y."/>
            <person name="Owa M."/>
            <person name="Liang F.X."/>
            <person name="Spektor A."/>
            <person name="Knaut H."/>
            <person name="Sanchez I."/>
            <person name="Dynlacht B.D."/>
        </authorList>
    </citation>
    <scope>FUNCTION</scope>
    <scope>INTERACTION WITH CSTPP1; TTLL1; TPGS1 AND LRRC49</scope>
    <scope>SUBCELLULAR LOCATION</scope>
</reference>
<reference key="50">
    <citation type="journal article" date="2023" name="J. Cell Sci.">
        <title>CCDC66 regulates primary cilium length and signaling via interactions with transition zone and axonemal proteins.</title>
        <authorList>
            <person name="Odabasi E."/>
            <person name="Conkar D."/>
            <person name="Deretic J."/>
            <person name="Batman U."/>
            <person name="Frikstad K.M."/>
            <person name="Patzke S."/>
            <person name="Firat-Karalar E.N."/>
        </authorList>
    </citation>
    <scope>INTERACTION WITH CCDC66</scope>
</reference>
<evidence type="ECO:0000250" key="1">
    <source>
        <dbReference type="UniProtKB" id="Q8AV28"/>
    </source>
</evidence>
<evidence type="ECO:0000250" key="2">
    <source>
        <dbReference type="UniProtKB" id="Q9R0L6"/>
    </source>
</evidence>
<evidence type="ECO:0000255" key="3"/>
<evidence type="ECO:0000256" key="4">
    <source>
        <dbReference type="SAM" id="MobiDB-lite"/>
    </source>
</evidence>
<evidence type="ECO:0000269" key="5">
    <source>
    </source>
</evidence>
<evidence type="ECO:0000269" key="6">
    <source>
    </source>
</evidence>
<evidence type="ECO:0000269" key="7">
    <source>
    </source>
</evidence>
<evidence type="ECO:0000269" key="8">
    <source>
    </source>
</evidence>
<evidence type="ECO:0000269" key="9">
    <source>
    </source>
</evidence>
<evidence type="ECO:0000269" key="10">
    <source>
    </source>
</evidence>
<evidence type="ECO:0000269" key="11">
    <source>
    </source>
</evidence>
<evidence type="ECO:0000269" key="12">
    <source>
    </source>
</evidence>
<evidence type="ECO:0000269" key="13">
    <source>
    </source>
</evidence>
<evidence type="ECO:0000269" key="14">
    <source>
    </source>
</evidence>
<evidence type="ECO:0000269" key="15">
    <source>
    </source>
</evidence>
<evidence type="ECO:0000269" key="16">
    <source>
    </source>
</evidence>
<evidence type="ECO:0000269" key="17">
    <source>
    </source>
</evidence>
<evidence type="ECO:0000269" key="18">
    <source>
    </source>
</evidence>
<evidence type="ECO:0000269" key="19">
    <source>
    </source>
</evidence>
<evidence type="ECO:0000269" key="20">
    <source>
    </source>
</evidence>
<evidence type="ECO:0000269" key="21">
    <source>
    </source>
</evidence>
<evidence type="ECO:0000269" key="22">
    <source>
    </source>
</evidence>
<evidence type="ECO:0000269" key="23">
    <source>
    </source>
</evidence>
<evidence type="ECO:0000269" key="24">
    <source>
    </source>
</evidence>
<evidence type="ECO:0000269" key="25">
    <source>
    </source>
</evidence>
<evidence type="ECO:0000269" key="26">
    <source>
    </source>
</evidence>
<evidence type="ECO:0000269" key="27">
    <source>
    </source>
</evidence>
<evidence type="ECO:0000269" key="28">
    <source>
    </source>
</evidence>
<evidence type="ECO:0000269" key="29">
    <source>
    </source>
</evidence>
<evidence type="ECO:0000269" key="30">
    <source>
    </source>
</evidence>
<evidence type="ECO:0000269" key="31">
    <source>
    </source>
</evidence>
<evidence type="ECO:0000269" key="32">
    <source>
    </source>
</evidence>
<evidence type="ECO:0000269" key="33">
    <source>
    </source>
</evidence>
<evidence type="ECO:0000269" key="34">
    <source>
    </source>
</evidence>
<evidence type="ECO:0000269" key="35">
    <source>
    </source>
</evidence>
<evidence type="ECO:0000269" key="36">
    <source>
    </source>
</evidence>
<evidence type="ECO:0000269" key="37">
    <source>
    </source>
</evidence>
<evidence type="ECO:0000269" key="38">
    <source>
    </source>
</evidence>
<evidence type="ECO:0000303" key="39">
    <source>
    </source>
</evidence>
<evidence type="ECO:0000303" key="40">
    <source>
    </source>
</evidence>
<evidence type="ECO:0000305" key="41"/>
<evidence type="ECO:0000312" key="42">
    <source>
        <dbReference type="HGNC" id="HGNC:8727"/>
    </source>
</evidence>
<evidence type="ECO:0007744" key="43">
    <source>
    </source>
</evidence>
<evidence type="ECO:0007744" key="44">
    <source>
    </source>
</evidence>
<evidence type="ECO:0007744" key="45">
    <source>
    </source>
</evidence>
<evidence type="ECO:0007744" key="46">
    <source>
    </source>
</evidence>
<evidence type="ECO:0007744" key="47">
    <source>
    </source>
</evidence>
<evidence type="ECO:0007744" key="48">
    <source>
    </source>
</evidence>
<evidence type="ECO:0007744" key="49">
    <source>
    </source>
</evidence>
<evidence type="ECO:0007744" key="50">
    <source>
    </source>
</evidence>
<evidence type="ECO:0007744" key="51">
    <source>
    </source>
</evidence>
<evidence type="ECO:0007744" key="52">
    <source>
    </source>
</evidence>
<evidence type="ECO:0007744" key="53">
    <source>
    </source>
</evidence>
<accession>Q15154</accession>
<accession>A6NNN6</accession>
<accession>B4DYD5</accession>
<accession>E7ETA6</accession>
<accession>E7EV56</accession>
<accession>Q58F13</accession>
<accession>Q6P1K7</accession>
<accession>Q8NB85</accession>
<accession>Q9BWC1</accession>
<accession>Q9H4A2</accession>
<organism>
    <name type="scientific">Homo sapiens</name>
    <name type="common">Human</name>
    <dbReference type="NCBI Taxonomy" id="9606"/>
    <lineage>
        <taxon>Eukaryota</taxon>
        <taxon>Metazoa</taxon>
        <taxon>Chordata</taxon>
        <taxon>Craniata</taxon>
        <taxon>Vertebrata</taxon>
        <taxon>Euteleostomi</taxon>
        <taxon>Mammalia</taxon>
        <taxon>Eutheria</taxon>
        <taxon>Euarchontoglires</taxon>
        <taxon>Primates</taxon>
        <taxon>Haplorrhini</taxon>
        <taxon>Catarrhini</taxon>
        <taxon>Hominidae</taxon>
        <taxon>Homo</taxon>
    </lineage>
</organism>
<comment type="function">
    <text evidence="6 12 20 21 24 29 35">Required for centrosome assembly and function (PubMed:12403812, PubMed:15659651, PubMed:16943179). Essential for the correct localization of several centrosomal proteins including CEP250, CETN3, PCNT and NEK2 (PubMed:12403812, PubMed:15659651). Required to anchor microtubules to the centrosome (PubMed:12403812, PubMed:15659651). Also involved in cilium biogenesis by recruiting the BBSome, a ciliary protein complex involved in cilium biogenesis, to the centriolar satellites (PubMed:20551181, PubMed:24121310, PubMed:27979967). Recruits the tubulin polyglutamylase complex (TPGC) to centriolar satellites (PubMed:34782749).</text>
</comment>
<comment type="subunit">
    <text evidence="2 6 7 9 17 22 23 24 25 26 27 28 29 30 33 35 36 38">Self-associates. Interacts with C2CD3 (By similarity). Interacts with BBS4, BBS8, CETN3, HAP1, NDE1, NDEL1, MAP1LC3B, GABARAPAL2, and GABARAP (PubMed:12403812, PubMed:14520415, PubMed:15107855, PubMed:16291865, PubMed:24089205, PubMed:9361024). Interacts with CEP131; the interaction increases in response to ultraviolet light (UV) radiation (PubMed:24121310). Associates with microtubule; association to microtubule is reduced in response to cellular stress, such as ultraviolet light (UV) radiation or heat shock, in a process that requires p38 MAP kinase signaling (PubMed:24121310). Interacts with CFAP263 (PubMed:25074808). Interacts with SSX2IP (By similarity). Interacts with CCDC13 (PubMed:24816561). Interacts with CEP290 (By similarity). Interacts with PARD6A (PubMed:20719959). Interacts with KIAA0753/OFIP, CEP20/FOR20 and OFD1; the interaction with CEP20/FOR20 and OFD1 may be mediated by KIAA0753/OFIP (PubMed:26643951). Interacts with CCDC66 (PubMed:28235840, PubMed:36606424). Interacts with CCDC61 (PubMed:31789463). Interacts with DZIP1; localizes DZIP1 and the associated BBSome to centriolar satellite (PubMed:27979967). Interacts with CSTPP1, TTLL1, TPGS1 and LRRC49 (PubMed:34782749). Interacts with CFAP53 (PubMed:26538025).</text>
</comment>
<comment type="interaction">
    <interactant intactId="EBI-741421">
        <id>Q15154</id>
    </interactant>
    <interactant intactId="EBI-743598">
        <id>Q9NYB9</id>
        <label>ABI2</label>
    </interactant>
    <organismsDiffer>false</organismsDiffer>
    <experiments>3</experiments>
</comment>
<comment type="interaction">
    <interactant intactId="EBI-741421">
        <id>Q15154</id>
    </interactant>
    <interactant intactId="EBI-1805484">
        <id>Q8NFJ9</id>
        <label>BBS1</label>
    </interactant>
    <organismsDiffer>false</organismsDiffer>
    <experiments>2</experiments>
</comment>
<comment type="interaction">
    <interactant intactId="EBI-741421">
        <id>Q15154</id>
    </interactant>
    <interactant intactId="EBI-1805814">
        <id>Q96RK4</id>
        <label>BBS4</label>
    </interactant>
    <organismsDiffer>false</organismsDiffer>
    <experiments>17</experiments>
</comment>
<comment type="interaction">
    <interactant intactId="EBI-741421">
        <id>Q15154</id>
    </interactant>
    <interactant intactId="EBI-751035">
        <id>Q49A88</id>
        <label>CCDC14</label>
    </interactant>
    <organismsDiffer>false</organismsDiffer>
    <experiments>6</experiments>
</comment>
<comment type="interaction">
    <interactant intactId="EBI-741421">
        <id>Q15154</id>
    </interactant>
    <interactant intactId="EBI-2558372">
        <id>Q9UPN4</id>
        <label>CEP131</label>
    </interactant>
    <organismsDiffer>false</organismsDiffer>
    <experiments>6</experiments>
</comment>
<comment type="interaction">
    <interactant intactId="EBI-741421">
        <id>Q15154</id>
    </interactant>
    <interactant intactId="EBI-739498">
        <id>Q9P209</id>
        <label>CEP72</label>
    </interactant>
    <organismsDiffer>false</organismsDiffer>
    <experiments>7</experiments>
</comment>
<comment type="interaction">
    <interactant intactId="EBI-741421">
        <id>Q15154</id>
    </interactant>
    <interactant intactId="EBI-712001">
        <id>O95166</id>
        <label>GABARAP</label>
    </interactant>
    <organismsDiffer>false</organismsDiffer>
    <experiments>8</experiments>
</comment>
<comment type="interaction">
    <interactant intactId="EBI-741421">
        <id>Q15154</id>
    </interactant>
    <interactant intactId="EBI-720116">
        <id>P60520</id>
        <label>GABARAPL2</label>
    </interactant>
    <organismsDiffer>false</organismsDiffer>
    <experiments>2</experiments>
</comment>
<comment type="interaction">
    <interactant intactId="EBI-741421">
        <id>Q15154</id>
    </interactant>
    <interactant intactId="EBI-2805604">
        <id>Q2KHM9</id>
        <label>KIAA0753</label>
    </interactant>
    <organismsDiffer>false</organismsDiffer>
    <experiments>7</experiments>
</comment>
<comment type="interaction">
    <interactant intactId="EBI-741421">
        <id>Q15154</id>
    </interactant>
    <interactant intactId="EBI-2129148">
        <id>Q86YT6</id>
        <label>MIB1</label>
    </interactant>
    <organismsDiffer>false</organismsDiffer>
    <experiments>4</experiments>
</comment>
<comment type="interaction">
    <interactant intactId="EBI-741421">
        <id>Q15154</id>
    </interactant>
    <interactant intactId="EBI-716327">
        <id>O75665</id>
        <label>OFD1</label>
    </interactant>
    <organismsDiffer>false</organismsDiffer>
    <experiments>8</experiments>
</comment>
<comment type="interaction">
    <interactant intactId="EBI-741421">
        <id>Q15154</id>
    </interactant>
    <interactant intactId="EBI-530012">
        <id>O95613</id>
        <label>PCNT</label>
    </interactant>
    <organismsDiffer>false</organismsDiffer>
    <experiments>8</experiments>
</comment>
<comment type="interaction">
    <interactant intactId="EBI-741421">
        <id>Q15154</id>
    </interactant>
    <interactant intactId="EBI-2558770">
        <id>Q8WXW3</id>
        <label>PIBF1</label>
    </interactant>
    <organismsDiffer>false</organismsDiffer>
    <experiments>7</experiments>
</comment>
<comment type="interaction">
    <interactant intactId="EBI-741421">
        <id>Q15154</id>
    </interactant>
    <interactant intactId="EBI-413317">
        <id>Q96R06</id>
        <label>SPAG5</label>
    </interactant>
    <organismsDiffer>false</organismsDiffer>
    <experiments>2</experiments>
</comment>
<comment type="interaction">
    <interactant intactId="EBI-741421">
        <id>Q15154</id>
    </interactant>
    <interactant intactId="EBI-2212028">
        <id>Q9Y2D8</id>
        <label>SSX2IP</label>
    </interactant>
    <organismsDiffer>false</organismsDiffer>
    <experiments>10</experiments>
</comment>
<comment type="interaction">
    <interactant intactId="EBI-741421">
        <id>Q15154</id>
    </interactant>
    <interactant intactId="EBI-712969">
        <id>Q9Y3C0</id>
        <label>WASHC3</label>
    </interactant>
    <organismsDiffer>false</organismsDiffer>
    <experiments>5</experiments>
</comment>
<comment type="interaction">
    <interactant intactId="EBI-741421">
        <id>Q15154</id>
    </interactant>
    <interactant intactId="EBI-356498">
        <id>P62258</id>
        <label>YWHAE</label>
    </interactant>
    <organismsDiffer>false</organismsDiffer>
    <experiments>3</experiments>
</comment>
<comment type="interaction">
    <interactant intactId="EBI-741421">
        <id>Q15154</id>
    </interactant>
    <interactant intactId="EBI-347088">
        <id>P63104</id>
        <label>YWHAZ</label>
    </interactant>
    <organismsDiffer>false</organismsDiffer>
    <experiments>2</experiments>
</comment>
<comment type="interaction">
    <interactant intactId="EBI-741421">
        <id>Q15154</id>
    </interactant>
    <interactant intactId="EBI-994539">
        <id>P54256</id>
        <label>Hap1</label>
    </interactant>
    <organismsDiffer>true</organismsDiffer>
    <experiments>3</experiments>
</comment>
<comment type="interaction">
    <interactant intactId="EBI-11742977">
        <id>Q15154-3</id>
    </interactant>
    <interactant intactId="EBI-11096309">
        <id>Q9NYB9-2</id>
        <label>ABI2</label>
    </interactant>
    <organismsDiffer>false</organismsDiffer>
    <experiments>3</experiments>
</comment>
<comment type="interaction">
    <interactant intactId="EBI-11742977">
        <id>Q15154-3</id>
    </interactant>
    <interactant intactId="EBI-10175300">
        <id>Q8TD31-3</id>
        <label>CCHCR1</label>
    </interactant>
    <organismsDiffer>false</organismsDiffer>
    <experiments>5</experiments>
</comment>
<comment type="interaction">
    <interactant intactId="EBI-11742977">
        <id>Q15154-3</id>
    </interactant>
    <interactant intactId="EBI-11521003">
        <id>Q9UIA0</id>
        <label>CYTH4</label>
    </interactant>
    <organismsDiffer>false</organismsDiffer>
    <experiments>3</experiments>
</comment>
<comment type="interaction">
    <interactant intactId="EBI-11742977">
        <id>Q15154-3</id>
    </interactant>
    <interactant intactId="EBI-742102">
        <id>Q8IYI6</id>
        <label>EXOC8</label>
    </interactant>
    <organismsDiffer>false</organismsDiffer>
    <experiments>3</experiments>
</comment>
<comment type="interaction">
    <interactant intactId="EBI-11742977">
        <id>Q15154-3</id>
    </interactant>
    <interactant intactId="EBI-11993062">
        <id>Q8TBF8</id>
        <label>FAM81A</label>
    </interactant>
    <organismsDiffer>false</organismsDiffer>
    <experiments>5</experiments>
</comment>
<comment type="interaction">
    <interactant intactId="EBI-11742977">
        <id>Q15154-3</id>
    </interactant>
    <interactant intactId="EBI-348259">
        <id>Q96EZ8</id>
        <label>MCRS1</label>
    </interactant>
    <organismsDiffer>false</organismsDiffer>
    <experiments>3</experiments>
</comment>
<comment type="interaction">
    <interactant intactId="EBI-11742977">
        <id>Q15154-3</id>
    </interactant>
    <interactant intactId="EBI-10172876">
        <id>Q7Z6G3-2</id>
        <label>NECAB2</label>
    </interactant>
    <organismsDiffer>false</organismsDiffer>
    <experiments>5</experiments>
</comment>
<comment type="interaction">
    <interactant intactId="EBI-11742977">
        <id>Q15154-3</id>
    </interactant>
    <interactant intactId="EBI-749285">
        <id>Q15311</id>
        <label>RALBP1</label>
    </interactant>
    <organismsDiffer>false</organismsDiffer>
    <experiments>3</experiments>
</comment>
<comment type="interaction">
    <interactant intactId="EBI-11742977">
        <id>Q15154-3</id>
    </interactant>
    <interactant intactId="EBI-712969">
        <id>Q9Y3C0</id>
        <label>WASHC3</label>
    </interactant>
    <organismsDiffer>false</organismsDiffer>
    <experiments>3</experiments>
</comment>
<comment type="subcellular location">
    <subcellularLocation>
        <location evidence="1">Cytoplasm</location>
        <location evidence="1">Cytoskeleton</location>
    </subcellularLocation>
    <subcellularLocation>
        <location evidence="8 22 32">Cytoplasm</location>
        <location evidence="8 22 32">Cytoskeleton</location>
        <location evidence="8 22 32">Microtubule organizing center</location>
        <location evidence="8 22 32">Centrosome</location>
    </subcellularLocation>
    <subcellularLocation>
        <location evidence="9">Cytoplasmic granule</location>
    </subcellularLocation>
    <subcellularLocation>
        <location evidence="9 22 33 34 35">Cytoplasm</location>
        <location evidence="9 22 33 34 35">Cytoskeleton</location>
        <location evidence="9 22 33 34 35">Microtubule organizing center</location>
        <location evidence="9 22 33 34 35">Centrosome</location>
        <location evidence="9 22 33 34 35">Centriolar satellite</location>
    </subcellularLocation>
    <subcellularLocation>
        <location evidence="24">Cytoplasm</location>
        <location evidence="24">Cytoskeleton</location>
        <location evidence="24">Cilium basal body</location>
    </subcellularLocation>
    <text>Recruitment to the centrosome requires microtubules and dynein. The majority of the protein dissociates from the centrosome during metaphase and subsequently localizes to the cleavage site in telophase. Displaced from centriolar satellites and centrosome in response to cellular stress, such as ultraviolet light (UV) radiation or heat shock, in a process that requires p38 MAP kinase signaling.</text>
</comment>
<comment type="alternative products">
    <event type="alternative splicing"/>
    <isoform>
        <id>Q15154-1</id>
        <name>1</name>
        <sequence type="displayed"/>
    </isoform>
    <isoform>
        <id>Q15154-2</id>
        <name>2</name>
        <sequence type="described" ref="VSP_022611"/>
    </isoform>
    <isoform>
        <id>Q15154-3</id>
        <name>3</name>
        <sequence type="described" ref="VSP_022609 VSP_022610"/>
    </isoform>
    <isoform>
        <id>Q15154-4</id>
        <name>4</name>
        <sequence type="described" ref="VSP_059399 VSP_022611 VSP_059401"/>
    </isoform>
    <isoform>
        <id>Q15154-5</id>
        <name>5</name>
        <sequence type="described" ref="VSP_059400"/>
    </isoform>
</comment>
<comment type="tissue specificity">
    <text evidence="5 10 16 18">Expressed in blood, bone marrow, breast, lymph node, ovary and thyroid.</text>
</comment>
<comment type="induction">
    <text evidence="10 16">Expression is reduced in breast and ovarian cancer.</text>
</comment>
<comment type="PTM">
    <text evidence="24">Ubiquitinated. Undergoes monoubiquitination catalyzed by the E3 ubiquitin-protein ligase MIB1 in proliferating cells, preventing cilia formation (PubMed:24121310). Monoubiquitination by MIB1 is inhibited in response to cellular stress, such as ultraviolet light (UV) radiation or heat shock, resulting in cilia formation initiation (PubMed:24121310).</text>
</comment>
<comment type="PTM">
    <text evidence="52">Variant Ser-159 is phosphorylated.</text>
</comment>
<comment type="PTM">
    <text evidence="31 32">Phosphorylated on multiple serine and threonine residues by DYRK3 during the G2-to-M transition, after the nuclear-envelope breakdown (PubMed:29973724). Phosphorylation by DYRK3 promotes disassembly of pericentriolar material (PubMed:29973724). Phosphorylation at Ser-372 mediated by PLK4 is required to maintain the integrity of centriolar satellites (PubMed:30804208).</text>
</comment>
<comment type="disease">
    <text evidence="5">A chromosomal aberration involving PCM1 is found in papillary thyroid carcinomas (PTCs) (PubMed:10980597). Translocation t(8;10)(p21.3;q11.2) with RET links the protein kinase domain of RET to the major portion of PCM1 (PubMed:10980597).</text>
</comment>
<comment type="disease">
    <text evidence="13 14 15 18 19">A chromosomal aberration involving PCM1 is found in a variety of hematological malignancies including atypical chronic myeloid leukemia (atypical CML) and T-cell lymphoma (PubMed:15805263, PubMed:16034466, PubMed:16091753, PubMed:16424865, PubMed:16769584). Translocation t(8;9)(p22;p24) with JAK2 links the protein kinase domain of JAK2 to the major portion of PCM1 (PubMed:15805263, PubMed:16034466, PubMed:16091753, PubMed:16424865, PubMed:16769584).</text>
</comment>
<comment type="similarity">
    <text evidence="41">Belongs to the PCM1 family.</text>
</comment>
<comment type="sequence caution" evidence="41">
    <conflict type="miscellaneous discrepancy">
        <sequence resource="EMBL-CDS" id="AAH27477"/>
    </conflict>
    <text>Contaminating sequence. Potential poly-A sequence.</text>
</comment>
<comment type="sequence caution" evidence="41">
    <conflict type="miscellaneous discrepancy">
        <sequence resource="EMBL-CDS" id="AAH65022"/>
    </conflict>
    <text>Contaminating sequence. Potential poly-A sequence.</text>
</comment>
<comment type="sequence caution" evidence="41">
    <conflict type="erroneous initiation">
        <sequence resource="EMBL-CDS" id="BAC03656"/>
    </conflict>
    <text>Truncated N-terminus.</text>
</comment>
<comment type="sequence caution" evidence="41">
    <conflict type="miscellaneous discrepancy">
        <sequence resource="EMBL-CDS" id="CAC14882"/>
    </conflict>
    <text>Contaminating sequence.</text>
</comment>
<keyword id="KW-0002">3D-structure</keyword>
<keyword id="KW-0007">Acetylation</keyword>
<keyword id="KW-0025">Alternative splicing</keyword>
<keyword id="KW-0966">Cell projection</keyword>
<keyword id="KW-0160">Chromosomal rearrangement</keyword>
<keyword id="KW-0970">Cilium biogenesis/degradation</keyword>
<keyword id="KW-0175">Coiled coil</keyword>
<keyword id="KW-0963">Cytoplasm</keyword>
<keyword id="KW-0206">Cytoskeleton</keyword>
<keyword id="KW-0597">Phosphoprotein</keyword>
<keyword id="KW-1267">Proteomics identification</keyword>
<keyword id="KW-0656">Proto-oncogene</keyword>
<keyword id="KW-1185">Reference proteome</keyword>
<keyword id="KW-0832">Ubl conjugation</keyword>
<sequence>MATGGGPFEDGMNDQDLPNWSNENVDDRLNNMDWGAQQKKANRSSEKNKKKFGVESDKRVTNDISPESSPGVGRRRTKTPHTFPHSRYMSQMSVPEQAELEKLKQRINFSDLDQRSIGSDSQGRATAANNKRQLSENRKPFNFLPMQINTNKSKDASTNPPNRETIGSAQCKELFASALSNDLLQNCQVSEEDGRGEPAMESSQIVSRLVQIRDYITKASSMREDLVEKNERSANVERLTHLIDHLKEQEKSYMKFLKKILARDPQQEPMEEIENLKKQHDLLKRMLQQQEQLRALQGRQAALLALQHKAEQAIAVMDDSVVAETAGSLSGVSITSELNEELNDLIQRFHNQLRDSQPPAVPDNRRQAESLSLTREVSQSRKPSASERLPDEKVELFSKMRVLQEKKQKMDKLLGELHTLRDQHLNNSSSSPQRSVDQRSTSAPSASVGLAPVVNGESNSLTSSVPYPTASLVSQNESENEGHLNPSEKLQKLNEVRKRLNELRELVHYYEQTSDMMTDAVNENRKDEETEESEYDSEHENSEPVTNIRNPQVASTWNEVNSHSNAQCVSNNRDGRTVNSNCEINNRSAANIRALNMPPSLDCRYNREGEQEIHVAQGEDDEEEEEEAEEEGVSGASLSSHRSSLVDEHPEDAEFEQKINRLMAAKQKLRQLQDLVAMVQDDDAAQGVISASASNLDDFYPAEEDTKQNSNNTRGNANKTQKDTGVNEKAREKFYEAKLQQQQRELKQLQEERKKLIDIQEKIQALQTACPDLQLSAASVGNCPTKKYMPAVTSTPTVNQHETSTSKSVFEPEDSSIVDNELWSEMRRHEMLREELRQRRKQLEALMAEHQRRQGLAETASPVAVSLRSDGSENLCTPQQSRTEKTMATWGGSTQCALDEEGDEDGYLSEGIVRTDEEEEEEQDASSNDNFSVCPSNSVNHNSYNGKETKNRWKNNCPFSADENYRPLAKTRQQNISMQRQENLRWVSELSYVEEKEQWQEQINQLKKQLDFSVSICQTLMQDQQTLSCLLQTLLTGPYSVMPSNVASPQVHFIMHQLNQCYTQLTWQQNNVQRLKQMLNELMRQQNQHPEKPGGKERGSSASHPPSPSLFCPFSFPTQPVNLFNIPGFTNFSSFAPGMNFSPLFPSNFGDFSQNISTPSEQQQPLAQNSSGKTEYMAFPKPFESSSSIGAEKPRNKKLPEEEVESSRTPWLYEQEGEVEKPFIKTGFSVSVEKSTSSNRKNQLDTNGRRRQFDEESLESFSSMPDPVDPTTVTKTFKTRKASAQASLASKDKTPKSKSKKRNSTQLKSRVKNIRYESASMSSTCEPCKSRNRHSAQTEEPVQAKVFSRKNHEQLEKIIKCNRSTEISSETGSDFSMFEALRDTIYSEVATLISQNESRPHFLIELFHELQLLNTDYLRQRALYALQDIVSRHISESHEKGENVKSVNSGTWIASNSELTPSESLATTDDETFEKNFERETHKISEQNDADNASVLSVSSNFEPFATDDLGNTVIHLDQALARMREYERMKTEAESNSNMRCTCRIIEDGDGAGAGTTVNNLEETPVIENRSSQQPVSEVSTIPCPRIDTQQLDRQIKAIMKEVIPFLKEHMDEVCSSQLLTSVRRMVLTLTQQNDESKEFVKFFHKQLGSILQDSLAKFAGRKLKDCGEDLLVEISEVLFNELAFFKLMQDLDNNSITVKQRCKRKIEATGVIQSCAKEAKRILEDHGSPAGEIDDEDKDKDETETVKQTQTSEVYDGPKNVRSDISDQEEDEESEGCPVSINLSKAETQALTNYGSGEDENEDEEMEEFEEGPVDVQTSLQANTEATEENEHDEQVLQRDFKKTAESKNVPLEREATSKNDQNNCPVKPCYLNILEDEQPLNSAAHKESPPTVDSTQQPNPLPLRLPEMEPLVPRVKEVKSAQETPESSLAGSPDTESPVLVNDYEAESGNISQKSDEEDFVKVEDLPLKLTIYSEADLRKKMVEEEQKNHLSGEICEMQTEELAGNSETLKEPETVGAQSI</sequence>
<proteinExistence type="evidence at protein level"/>
<protein>
    <recommendedName>
        <fullName evidence="41">Pericentriolar material 1 protein</fullName>
        <shortName>PCM-1</shortName>
        <shortName>hPCM-1</shortName>
    </recommendedName>
</protein>
<name>PCM1_HUMAN</name>